<accession>O91936</accession>
<sequence length="3014" mass="327119">MSTNPKPQRKTKRNTNRRPQDVKFPGGGQIVGGVYLLPRRGPRLGVRATRKTSERSQPRGRRQPIPKARQPTGRSWGQPGYPWPLYANEGLGWAGWLLSPRGSRPNWGPNDPRRKSRNLGKVIDTLTCGFADLMGYIPLVGGPVGGVARALAHGVRVLEDGVNYATGNLPGCSFSIFILALLSCLTVPTSAVPYRNASGVYHVTNDCPNSSIVYEAEDLILHAPGCVPCVRQGNVSRCWVQITPTLSAPSLGAVTAPLRRAVDYLAGGAALCSALYVGDACGAVFLVGQMFTYSPRRHNVVQDCNCSIYSGHITGHRMAWDMMMNWSPTTALVMAQLLRIPQVVIDIIAGAHWGVLFAAAYYASAANWAKVVLVLFLFAGVDANTRTVGGSAAQGARGLASLFTPGPQQNLQLINTNGSWHINRTALNCNDSLQTGFVAGLLYYHKFNSTGCPQRMASCRPLAAFDQGWGTISYAAVSGPSDDKPYCWHYPPRPCGIVPARGVCGPVYCFTPSPVVVGTTDRKGNPTYSWGENETDIFLLNNTRPPTGNWFGCTWMNSTGFVKTCGAPPCNLGPTGNNSLKCPTDCFRKHPDATYTKCGSGPWLTPRCLVHYPYRLWHYPCTLNYTIFKVRMYIGGLEHRLEVACNWTRGERCDLEDRDRAELSPLLHTTTQWAILPCSFTPTPALSTGLIHLHQNIVDTQYLYGLSSSIVSWAVKWEYIVLAFLLLADARICTCLWIMLLVCQAEAALENVIVLNAAAAAGTHGFFWGLLVICFAWHFKGRLVPGATYLCLGIWPLLLLLFLLPQRALALDSSDGGTVGCLVLTILTIFTLTPGYKKMVVLVIWWLQYFIARVEAFIHVWVPPLQVRGGRDAIIMLTCLFHPALGFEVTKILLGILGPLYLLQYSLIKLPYFIRARALLRACLLAKHLACGRYVQAALLHLGRLTGTYIYDHLAPMKDWAASGLRDLAVATEPIIFSPMETKVITWGADTAACGDILAGLPVSARRGHEIFLGPADDIREAGWRLLAPITAYAQQTRGVLGAIIVSLTGRDKNEAEGEVQVLSTATQTFLGTCINGVMWTVFHGAGAKTLAGPKGPVVQMYTNVDKDLVGWPTPPGTRSLTPCTCGSADLYLVTRHADVVPARRRGDTRASLLSPRPISYLKGSSGGPVMCPSGHVVGVFRAAVCTRGVAKALDFIPVENLETTMRSPVFTDNSTPPAVPHEFQVGHLHAPTGSGKSTKVPAAYAAQGYKVLVLNPSVAATLGFGAYMSRAYGVDPNIRTGVRTVTTGAAITYSTYGKFLADGGCSGGAYDVIICDECHSQDATTILGIGTVLDQAETAGARLVVLATATPPGSVTTPHPNIEEVALPSEGEIPFYGRAIPLALIKGGRHLIFCHSKKKCDELAKQLTSQGVNAVAYYRGLDVAVIPATGDVVVCSTDALMTGFTGDFDSVIDCNTTVTQTVDFSLDPTFTIETTTVPQDAVSRSQRRGRTGRGRHGIYRYVSSGERPSGIFDSVVLCECYDAGCAWYDLTPAETTVRLRAYLNTPGLPVCQDHLEFWEGVFTGLTNIDAHMLSQTKQGGENFPYLVAYQATVCVRAKAPPPSWDTMWKCMLRLKPTLTGPTPLLYRLGAVQNEITLTHPITKYIMACMSADLEVITSTWVLVGGVVAALAAYCLTVGSVAIVGRIILSGRPAIIPDREVLYQQFDEMEECSASLPYMDEARAIAEQFKEKVLGLIGTAGQKAETLKPAATSMWNRAEQFWAKHMWNFVSGIQYLAGLSTLPGNPAVATLMSFTAAVTSPLTTQQTLLFNILGGWVASQIAPPTAATAFVVSGMAGAAVGSIGLGRVLIDILAGYGAGVAGALVAFKIMCGEKPTAEDLVNLLPSILCPGALVVGVICAAVLRRHIGPGEGAVQWMNRLIAFASRGNHVSPTHYVPETDASAKVTQLLSSLTVTSLLKRLHTWIGEDYSTPCDGTWLRAIWDWVCTALTDFKAWLQAKLLPQLPGVPFLSCQRGYRGVWRGDGVNSTKCPCGATISGHVKNGTMRIVGPKLCSNTWHGTFPINATTTGPSVPAPAPNYKFALWRVGAADYAEVRRVGDYHYITGVTQDNLKCPCQVPSPEFFTELDGVRIHRYAPPCNPLLREEVCFSVGLHSFVVGSQLPCEPEPDVTVLTSMLSDPAHITAETAKRRLDRGSPPSLASSSASQLSAPSLKATCTTQGHHPDADLIEANLLWRQCMGGNITRVEAENKVVILDSFEPLKADDDDREISVSADCFRRGPAFPPALPIWARPGYDPPLLETWKQPDYDPPQVSGCPLPPAGLPPVPPPRRKRKPVVLSDSNVSQVLADLAHARFKADTQSIEGQDSAVGTSSQPDSGPEEKRDDDSDAASYSSMPPLEGEPGDPDLSSGSWSTVSDEDSVVCCSMSYSWTGALITPCSAEEEKLPINPLSNTLLRHHNLVYSTSSRSAGQRQKKVTFDRLQVLDDHYREVVDEMKRLASKVKARLLPLEEACGLTPPHSARSKYGYGAKEVRSLDKKALNHIKGVWQDLLDDSDTPLPTTIMAKNEVFAVEPSKGGKKPARLIVYPDLGVRVCEKRALYDIAQKLPTALMGPSYGFQYSPAQRVEFLLKTWRSKKTPMAFSYDTRCFDSTVTEHDIMTEESIYQSCDLQPEARAAIRSLTQRLYCGGPMYNSKGQQCGYRRCRASGVFTTSMGNTMTCYIKALASCRAAKLRDCTLLVCGDDLVAICESQGTHEDEASLRAFTEAMTRYSAPPGDPPVPAYDLELVTSCSSNVSVAHDASGNRVYYLTRDPQVPLARAAWETAKHSPVNSWLGNIIMYAPTLWARIVLMTHFFSVLQSQEQLEKALAFEMYGSVYSVTPLDLPAIIQRLHGLSAFTLHSYSPSEINRVSSCLRKLGVPPLRAWRHRARAVRAKLIAQGGKAAICGIYLFNWAVKTKRKLTPLADADRLDLSSWFTVGAGGGDIYHSMSRARPRCILLCLLLLTVGVGIFLLPAR</sequence>
<comment type="function">
    <molecule>Mature core protein</molecule>
    <text evidence="2 4 5 6 11 19">Packages viral RNA to form a viral nucleocapsid, and promotes virion budding (Probable). Participates in the viral particle production as a result of its interaction with the non-structural protein 5A (By similarity). Binds RNA and may function as a RNA chaperone to induce the RNA structural rearrangements taking place during virus replication (By similarity). Modulates viral translation initiation by interacting with viral IRES and 40S ribosomal subunit (By similarity). Affects various cell signaling pathways, host immunity and lipid metabolism (Probable). Prevents the establishment of cellular antiviral state by blocking the interferon-alpha/beta (IFN-alpha/beta) and IFN-gamma signaling pathways and by blocking the formation of phosphorylated STAT1 and promoting ubiquitin-mediated proteasome-dependent degradation of STAT1 (By similarity). Activates STAT3 leading to cellular transformation (By similarity). Regulates the activity of cellular genes, including c-myc and c-fos (By similarity). May repress the promoter of p53, and sequester CREB3 and SP110 isoform 3/Sp110b in the cytoplasm (By similarity). Represses cell cycle negative regulating factor CDKN1A, thereby interrupting an important check point of normal cell cycle regulation (By similarity). Targets transcription factors involved in the regulation of inflammatory responses and in the immune response: suppresses TNF-induced NF-kappa-B activation, and activates AP-1 (By similarity). Binds to dendritic cells (DCs) via C1QR1, resulting in down-regulation of T-lymphocytes proliferation (By similarity). Alters lipid metabolism by interacting with hepatocellular proteins involved in lipid accumulation and storage (By similarity). Induces up-regulation of FAS promoter activity, and thereby contributes to the increased triglyceride accumulation in hepatocytes (steatosis) (By similarity).</text>
</comment>
<comment type="function">
    <molecule>Envelope glycoprotein E1</molecule>
    <text evidence="5">Forms a heterodimer with envelope glycoprotein E2, which mediates virus attachment to the host cell, virion internalization through clathrin-dependent endocytosis and fusion with host membrane (By similarity). Fusion with the host cell is most likely mediated by both E1 and E2, through conformational rearrangements of the heterodimer required for fusion rather than a classical class II fusion mechanism (By similarity). E1/E2 heterodimer binds host apolipoproteins such as APOB and ApoE thereby forming a lipo-viro-particle (LVP) (By similarity). APOE associated to the LVP allows the initial virus attachment to cell surface receptors such as the heparan sulfate proteoglycans (HSPGs), syndecan-1 (SDC1), syndecan-1 (SDC2), the low-density lipoprotein receptor (LDLR) and scavenger receptor class B type I (SCARB1) (By similarity). The cholesterol transfer activity of SCARB1 allows E2 exposure and binding of E2 to SCARB1 and the tetraspanin CD81 (By similarity). E1/E2 heterodimer binding on CD81 activates the epithelial growth factor receptor (EGFR) signaling pathway (By similarity). Diffusion of the complex E1-E2-EGFR-SCARB1-CD81 to the cell lateral membrane allows further interaction with Claudin 1 (CLDN1) and occludin (OCLN) to finally trigger HCV entry (By similarity).</text>
</comment>
<comment type="function">
    <molecule>Envelope glycoprotein E2</molecule>
    <text evidence="4 5">Forms a heterodimer with envelope glycoprotein E1, which mediates virus attachment to the host cell, virion internalization through clathrin-dependent endocytosis and fusion with host membrane (By similarity). Fusion with the host cell is most likely mediated by both E1 and E2, through conformational rearrangements of the heterodimer required for fusion rather than a classical class II fusion mechanism (By similarity). The interaction between envelope glycoprotein E2 and host apolipoprotein E/APOE allows the proper assembly, maturation and infectivity of the viral particles (By similarity). This interaction is probably promoted via the up-regulation of cellular autophagy by the virus (By similarity). E1/E2 heterodimer binds host apolipoproteins such as APOB and APOE thereby forming a lipo-viro-particle (LVP) (By similarity). APOE associated to the LVP allows the initial virus attachment to cell surface receptors such as the heparan sulfate proteoglycans (HSPGs), syndecan-1 (SDC1), syndecan-1 (SDC2), the low-density lipoprotein receptor (LDLR) and scavenger receptor class B type I (SCARB1) (By similarity). The cholesterol transfer activity of SCARB1 allows E2 exposure and binding of E2 to SCARB1 and the tetraspanin CD81 (By similarity). E1/E2 heterodimer binding on CD81 activates the epithelial growth factor receptor (EGFR) signaling pathway (By similarity). Diffusion of the complex E1-E2-EGFR-SCARB1-CD81 to the cell lateral membrane allows further interaction with Claudin 1 (CLDN1) and occludin (OCLN) to finally trigger HCV entry (By similarity). Inhibits host EIF2AK2/PKR activation, preventing the establishment of an antiviral state (By similarity). Viral ligand for CD209/DC-SIGN and CLEC4M/DC-SIGNR, which are respectively found on dendritic cells (DCs), and on liver sinusoidal endothelial cells and macrophage-like cells of lymph node sinuses (By similarity). These interactions allow the capture of circulating HCV particles by these cells and subsequent facilitated transmission to permissive cells such as hepatocytes and lymphocyte subpopulations (By similarity). The interaction between E2 and host amino acid transporter complex formed by SLC3A2 and SLC7A5/LAT1 may facilitate viral entry into host cell (By similarity).</text>
</comment>
<comment type="function">
    <molecule>Viroporin p7</molecule>
    <text evidence="5 11 19">Ion channel protein that acts as a viroporin and plays an essential role in the assembly, envelopment and secretion of viral particles (By similarity). Regulates the host cell secretory pathway, which induces the intracellular retention of viral glycoproteins and favors assembly of viral particles (By similarity). Creates a pore in acidic organelles and releases Ca(2+) and H(+) in the cytoplasm of infected cells, leading to a productive viral infection (By similarity). High levels of cytoplasmic Ca(2+) may trigger membrane trafficking and transport of viral ER-associated proteins to viroplasms, sites of viral genome replication (Probable). This ionic imbalance induces the assembly of the inflammasome complex, which triggers the maturation of pro-IL-1beta into IL-1beta through the action of caspase-1 (By similarity). Targets also host mitochondria and induces mitochondrial depolarization (By similarity). In addition of its role as a viroporin, acts as a lipid raft adhesion factor (By similarity).</text>
</comment>
<comment type="function">
    <molecule>Protease NS2</molecule>
    <text evidence="3 5">Cysteine protease required for the proteolytic auto-cleavage between the non-structural proteins NS2 and NS3 (By similarity). The N-terminus of NS3 is required for the function of NS2 protease (active region NS2-3) (By similarity). Promotes the initiation of viral particle assembly by mediating the interaction between structural and non-structural proteins (By similarity).</text>
</comment>
<comment type="function">
    <molecule>Serine protease/helicase NS3</molecule>
    <text evidence="5 12">Displays three enzymatic activities: serine protease with a chymotrypsin-like fold, NTPase and RNA helicase (By similarity). NS3 serine protease, in association with NS4A, is responsible for the cleavages of NS3-NS4A, NS4A-NS4B, NS4B-NS5A and NS5A-NS5B (By similarity). The NS3/NS4A complex prevents phosphorylation of host IRF3, thus preventing the establishment of dsRNA induced antiviral state (By similarity). The NS3/NS4A complex induces host amino acid transporter component SLC3A2, thus contributing to HCV propagation (By similarity). NS3 RNA helicase binds to RNA and unwinds both dsDNA and dsRNA in the 3' to 5' direction, and likely resolves RNA complicated stable secondary structures in the template strand (By similarity). Binds a single ATP and catalyzes the unzipping of a single base pair of dsRNA (By similarity). Inhibits host antiviral proteins TBK1 and IRF3 thereby preventing the establishment of an antiviral state (By similarity). Cleaves host MAVS/CARDIF thereby preventing the establishment of an antiviral state (By similarity). Cleaves host TICAM1/TRIF, thereby disrupting TLR3 signaling and preventing the establishment of an antiviral state (By similarity).</text>
</comment>
<comment type="function">
    <molecule>Non-structural protein 4A</molecule>
    <text evidence="5 12">Peptide cofactor which forms a non-covalent complex with the N-terminal of NS3 serine protease (By similarity). The NS3/NS4A complex prevents phosphorylation of host IRF3, thus preventing the establishment of dsRNA induced antiviral state (By similarity). The NS3/NS4A complex induces host amino acid transporter component SLC3A2, thus contributing to HCV propagation (By similarity).</text>
</comment>
<comment type="function">
    <molecule>Non-structural protein 4B</molecule>
    <text evidence="5">Induces a specific membrane alteration that serves as a scaffold for the virus replication complex (By similarity). This membrane alteration gives rise to the so-called ER-derived membranous web that contains the replication complex (By similarity). NS4B self-interaction contributes to its function in membranous web formation (By similarity). Promotes host TRIF protein degradation in a CASP8-dependent manner thereby inhibiting host TLR3-mediated interferon signaling (By similarity). Disrupts the interaction between STING and TBK1 contributing to the inhibition of interferon signaling (By similarity).</text>
</comment>
<comment type="function">
    <molecule>Non-structural protein 5A</molecule>
    <text evidence="2 4 5 11 12">Phosphorylated protein that is indispensable for viral replication and assembly (By similarity). Both hypo- and hyperphosphorylated states are required for the viral life cycle (By similarity). The hyperphosphorylated form of NS5A is an inhibitor of viral replication (By similarity). Involved in RNA-binding and especially in binding to the viral genome (By similarity). Zinc is essential for RNA-binding (By similarity). Participates in the viral particle production as a result of its interaction with the mature viral core protein (By similarity). Its interaction with host VAPB may target the viral replication complex to vesicles (By similarity). Down-regulates viral IRES translation initiation (By similarity). Mediates interferon resistance, presumably by interacting with and inhibiting host EIF2AK2/PKR (By similarity). Prevents BIN1-induced apoptosis (By similarity). Acts as a transcriptional activator of some host genes important for viral replication when localized in the nucleus (By similarity). Via the interaction with host PACSIN2, modulates lipid droplet formation in order to promote virion assembly (By similarity). Modulates TNFRSF21/DR6 signaling pathway for viral propagation (By similarity).</text>
</comment>
<comment type="function">
    <molecule>RNA-directed RNA polymerase</molecule>
    <text evidence="5">RNA-dependent RNA polymerase that performs primer-template recognition and RNA synthesis during viral replication. Initiates RNA transcription/replication at a flavin adenine dinucleotide (FAD), resulting in a 5'- FAD cap on viral RNAs. In this way, recognition of viral 5' RNA by host pattern recognition receptors can be bypassed, thereby evading activation of antiviral pathways.</text>
</comment>
<comment type="catalytic activity">
    <molecule>Serine protease/helicase NS3</molecule>
    <reaction evidence="5">
        <text>Hydrolysis of four peptide bonds in the viral precursor polyprotein, commonly with Asp or Glu in the P6 position, Cys or Thr in P1 and Ser or Ala in P1'.</text>
        <dbReference type="EC" id="3.4.21.98"/>
    </reaction>
</comment>
<comment type="catalytic activity">
    <molecule>Serine protease/helicase NS3</molecule>
    <reaction evidence="5">
        <text>a ribonucleoside 5'-triphosphate + H2O = a ribonucleoside 5'-diphosphate + phosphate + H(+)</text>
        <dbReference type="Rhea" id="RHEA:23680"/>
        <dbReference type="ChEBI" id="CHEBI:15377"/>
        <dbReference type="ChEBI" id="CHEBI:15378"/>
        <dbReference type="ChEBI" id="CHEBI:43474"/>
        <dbReference type="ChEBI" id="CHEBI:57930"/>
        <dbReference type="ChEBI" id="CHEBI:61557"/>
        <dbReference type="EC" id="3.6.1.15"/>
    </reaction>
</comment>
<comment type="catalytic activity">
    <molecule>Serine protease/helicase NS3</molecule>
    <reaction evidence="5">
        <text>ATP + H2O = ADP + phosphate + H(+)</text>
        <dbReference type="Rhea" id="RHEA:13065"/>
        <dbReference type="ChEBI" id="CHEBI:15377"/>
        <dbReference type="ChEBI" id="CHEBI:15378"/>
        <dbReference type="ChEBI" id="CHEBI:30616"/>
        <dbReference type="ChEBI" id="CHEBI:43474"/>
        <dbReference type="ChEBI" id="CHEBI:456216"/>
        <dbReference type="EC" id="3.6.4.13"/>
    </reaction>
</comment>
<comment type="catalytic activity">
    <molecule>RNA-directed RNA polymerase</molecule>
    <reaction evidence="14">
        <text>RNA(n) + a ribonucleoside 5'-triphosphate = RNA(n+1) + diphosphate</text>
        <dbReference type="Rhea" id="RHEA:21248"/>
        <dbReference type="Rhea" id="RHEA-COMP:14527"/>
        <dbReference type="Rhea" id="RHEA-COMP:17342"/>
        <dbReference type="ChEBI" id="CHEBI:33019"/>
        <dbReference type="ChEBI" id="CHEBI:61557"/>
        <dbReference type="ChEBI" id="CHEBI:140395"/>
        <dbReference type="EC" id="2.7.7.48"/>
    </reaction>
</comment>
<comment type="cofactor">
    <molecule>Protease NS2</molecule>
    <cofactor evidence="3">
        <name>Zn(2+)</name>
        <dbReference type="ChEBI" id="CHEBI:29105"/>
    </cofactor>
    <text evidence="3">Activity of protease NS2 is dependent on zinc ions and completely inhibited by EDTA. This is probably due to the fact that NS2 protease activity needs NS3 N-terminus that binds a zinc atom (active region NS2-3).</text>
</comment>
<comment type="cofactor">
    <molecule>Serine protease/helicase NS3</molecule>
    <cofactor evidence="3">
        <name>Zn(2+)</name>
        <dbReference type="ChEBI" id="CHEBI:29105"/>
    </cofactor>
    <cofactor evidence="12">
        <name>Mg(2+)</name>
        <dbReference type="ChEBI" id="CHEBI:18420"/>
    </cofactor>
    <text evidence="3 12">Binds 1 zinc ion, which has a structural role (By similarity). The magnesium ion is essential for the helicase activity (By similarity).</text>
</comment>
<comment type="cofactor">
    <molecule>RNA-directed RNA polymerase</molecule>
    <cofactor evidence="3">
        <name>Mg(2+)</name>
        <dbReference type="ChEBI" id="CHEBI:18420"/>
    </cofactor>
    <text evidence="3">Binds 2 magnesium ion that constitute a dinuclear catalytic metal center.</text>
</comment>
<comment type="activity regulation">
    <molecule>Viroporin p7</molecule>
    <text evidence="2 5">Inhibited by the antiviral drug hexamethylene amiloride (By similarity). Inhibition by amantadine appears to be genotype-dependent (By similarity). Also inhibited by long-alkyl-chain iminosugar derivatives (By similarity).</text>
</comment>
<comment type="activity regulation">
    <molecule>RNA-directed RNA polymerase</molecule>
    <text evidence="5">Activity is up-regulated by PRK2/PKN2-mediated phosphorylation.</text>
</comment>
<comment type="subunit">
    <molecule>Mature core protein</molecule>
    <text evidence="2 4 5 6 8 9 11">Homooligomer (By similarity). Interacts with E1 (via C-terminus) (By similarity). Interacts with the non-structural protein 5A (By similarity). Interacts (via N-terminus) with host STAT1 (via SH2 domain); this interaction results in decreased STAT1 phosphorylation and ubiquitin-mediated proteasome-dependent STAT1 degradation, leading to decreased IFN-stimulated gene transcription (By similarity). Interacts with host STAT3; this interaction constitutively activates STAT3 (By similarity). Interacts with host LTBR receptor (By similarity). Interacts with host TNFRSF1A receptor and possibly induces apoptosis (By similarity). Interacts with host HNRPK (By similarity). Interacts with host YWHAE (By similarity). Interacts with host UBE3A/E6AP (By similarity). Interacts with host DDX3X (By similarity). Interacts with host APOA2 (By similarity). Interacts with host RXRA protein (By similarity). Interacts with host SP110 isoform 3/Sp110b; this interaction sequesters the transcriptional corepressor SP110 away from the nucleus (By similarity). Interacts with host CREB3 nuclear transcription protein; this interaction triggers cell transformation (By similarity). Interacts with host ACY3 (By similarity). Interacts with host C1QR1 (By similarity). Interacts with host RBM24; this interaction, which enhances the interaction of the mature core protein with 5'-UTR, may inhibit viral translation and favor replication (By similarity). Interacts with host EIF2AK2/PKR; this interaction induces the autophosphorylation of EIF2AK2 (By similarity). Part of the viral assembly initiation complex composed of NS2, E1, E2, NS3, NS4A, NS5A and the mature core protein (By similarity).</text>
</comment>
<comment type="subunit">
    <molecule>Envelope glycoprotein E1</molecule>
    <text evidence="5 11">Forms a heterodimer with envelope glycoprotein E2 (By similarity). Interacts with mature core protein (By similarity). Interacts with protease NS2 (By similarity). The heterodimer E1/E2 interacts with host CLDN1; this interaction plays a role in viral entry into host cell (By similarity). Interacts with host SPSB2 (via C-terminus) (By similarity). Part of the viral assembly initiation complex composed of NS2, E1, E2, NS3, NS4A, NS5A and the mature core protein (By similarity). Interacts with host NEURL3; this interaction prevents E1 binding to glycoprotein E2 (By similarity).</text>
</comment>
<comment type="subunit">
    <molecule>Envelope glycoprotein E2</molecule>
    <text evidence="5 11 12">Forms a heterodimer with envelope glycoprotein E1 (By similarity). Interacts with host CD81 and SCARB1 receptors; these interactions play a role in viral entry into host cell (By similarity). Interacts with host EIF2AK2/PKR; this interaction inhibits EIF2AK2 and probably allows the virus to evade the innate immune response (By similarity). Interacts with host CD209/DC-SIGN and CLEC4M/DC-SIGNR (By similarity). Interact with host SPCS1; this interaction is essential for viral particle assembly (By similarity). Interacts with protease NS2 (By similarity). The heterodimer E1/E2 interacts with host CLDN1; this interaction plays a role in viral entry into host cell (By similarity). Part of the viral assembly initiation complex composed of NS2, E1, E2, NS3, NS4A, NS5A and the mature core protein (By similarity). Interacts with host SLC3A2/4F2hc; the interaction may facilitate viral entry into host cell (By similarity). Interacts with human PLSCR1 (By similarity).</text>
</comment>
<comment type="subunit">
    <molecule>Viroporin p7</molecule>
    <text evidence="1 5 11">Homohexamer (By similarity). Homoheptamer (By similarity). Interacts with protease NS2 (By similarity).</text>
</comment>
<comment type="subunit">
    <molecule>Protease NS2</molecule>
    <text evidence="5 11">Homodimer (By similarity). Interacts with host SPCS1; this interaction is essential for viral particle assembly (By similarity). Interacts with envelope glycoprotein E1 (By similarity). Interacts with envelope glycoprotein E2 (By similarity). Interacts with viroporin p7 (By similarity). Interacts with serine protease/helicase NS3 (By similarity). Part of the replication complex composed of NS2, NS3, NS4A, NS4B, NS5A and the RNA-directed RNA polymerase embedded in an ER-derived membranous web (By similarity). Part of the viral assembly initiation complex composed of NS2, E1, E2, NS3, NS4A, NS5A and the mature core protein (By similarity).</text>
</comment>
<comment type="subunit">
    <molecule>Serine protease/helicase NS3</molecule>
    <text evidence="3 5 11 12">Interacts with protease NS2 (By similarity). Interacts with non-structural protein 4A; this interaction stabilizes the folding of NS3 serine protease (By similarity). NS3-NS4A interaction is essential for NS3 activation and allows membrane anchorage of the latter (By similarity). NS3/NS4A complex also prevents phosphorylation of host IRF3, thus preventing the establishment of dsRNA induced antiviral state (By similarity). Interacts with host MAVS; this interaction leads to the cleavage and inhibition of host MAVS (By similarity). Interacts with host TICAM1; this interaction leads to the cleavage and inhibition of host TICAM1 (By similarity). Interacts with host TANK-binding kinase/TBK1; this interaction results in the inhibition of the association between TBK1 and IRF3, which leads to the inhibition of IRF3 activation (By similarity). Interacts with host RBM24 (By similarity). Part of the replication complex composed of NS2, NS3, NS4A, NS4B, NS5A and the RNA-directed RNA polymerase embedded in an ER-derived membranous web (By similarity). Part of the viral assembly initiation complex composed of NS2, E1, E2, NS3, NS4A, NS5A and the mature core protein (By similarity).</text>
</comment>
<comment type="subunit">
    <molecule>Non-structural protein 4A</molecule>
    <text evidence="2 3 5 11">Interacts with NS3 serine protease; this interaction stabilizes the folding of NS3 serine protease (By similarity). NS3-NS4A interaction is essential for NS3 activation and allows membrane anchorage of the latter (By similarity). Interacts with non-structural protein 5A (via N-terminus) (By similarity). Part of the replication complex composed of NS2, NS3, NS4A, NS4B, NS5A and the RNA-directed RNA polymerase embedded in an ER-derived membranous web (By similarity). Part of the viral assembly initiation complex composed of NS2, E1, E2, NS3, NS4A, NS5A and the mature core protein (By similarity).</text>
</comment>
<comment type="subunit">
    <molecule>Non-structural protein 4B</molecule>
    <text evidence="5 11">Homomultimer (By similarity). Interacts with non-structural protein NS5A (By similarity). Interacts with host PLA2G4C; this interaction likely initiates the recruitment of replication complexes to lipid droplets (By similarity). Interacts with host STING; this interaction disrupts the interaction between STING and TBK1 thereby suppressing the interferon signaling (By similarity). Part of the replication complex composed of NS2, NS3, NS4A, NS4B, NS5A and the RNA-directed RNA polymerase embedded in an ER-derived membranous web (By similarity).</text>
</comment>
<comment type="subunit">
    <molecule>Non-structural protein 5A</molecule>
    <text evidence="2 3 4 5 11">Monomer. Homodimer; dimerization is required for RNA-binding (By similarity). Interacts with the mature core protein (By similarity). Interacts (via N-terminus) with non-structural protein 4A (By similarity). Interacts with non-structural protein 4B. Interacts (via region D2) with RNA-directed RNA polymerase (By similarity). Part of the viral assembly initiation complex composed of NS2, E1, E2, NS3, NS4A, NS5A and the mature core protein (By similarity). Part of the replication complex composed of NS2, NS3, NS4A, NS4B, NS5A and the RNA-directed RNA polymerase embedded in an ER-derived membranous web (By similarity). Interacts with host GRB2 (By similarity). Interacts with host BIN1 (By similarity). Interacts with host PIK3R1 (By similarity). Interacts with host SRCAP (By similarity). Interacts with host FKBP8 (By similarity). Interacts (via C-terminus) with host VAPB (via MSP domain). Interacts with host EIF2AK2/PKR; this interaction leads to disruption of EIF2AK2 dimerization by NS5A and probably allows the virus to evade the innate immune response. Interacts (via N-terminus) with host PACSIN2 (via N-terminus); this interaction attenuates protein kinase C alpha-mediated phosphorylation of PACSIN2 by disrupting the interaction between PACSIN2 and PRKCA (By similarity). Interacts (via N-terminus) with host SRC kinase (via SH2 domain) (By similarity). Interacts with most Src-family kinases (By similarity). Interacts with host IFI27 and SKP2; promotes the ubiquitin-mediated proteasomal degradation of NS5A (By similarity). Interacts with host GPS2 (By similarity). Interacts with host TNFRSF21; this interaction allows the modulation by the virus of JNK, p38 MAPK, STAT3, and Akt signaling pathways in a DR6-dependent manner. Interacts (via N-terminus) with host CIDEB (via N-terminus); this interaction seems to regulate the association of HCV particles with APOE (By similarity). Interacts with host CHKA/Choline Kinase-alpha; CHKA bridges host PI4KA and NS5A and potentiates NS5A-stimulated PI4KA activity, which then facilitates the targeting of the ternary complex to the ER for viral replication (By similarity). Interacts with host SPSB2 (via C-terminus); this interaction targets NS5A for ubiquitination and degradation (By similarity). Interacts with host RAB18; this interaction may promote the association of NS5A and other replicase components with lipid droplets (By similarity). Interacts (via region D2) with host PPIA/CYPA; the interaction stimulates RNA-binding ability of NS5A and is dependent on the peptidyl-prolyl cis-trans isomerase activity of PPIA/CYPA. Interacts with host TRIM14; this interaction induces the degradation of NS5A (By similarity).</text>
</comment>
<comment type="subunit">
    <molecule>RNA-directed RNA polymerase</molecule>
    <text evidence="5">Homooligomer (By similarity). Interacts with non-structural protein 5A (By similarity). Interacts with host VAPB (By similarity). Interacts with host PRK2/PKN2 (By similarity). Interacts with host HNRNPA1 and SEPT6; these interactions facilitate viral replication (By similarity). Part of the replication complex composed of NS2, NS3, NS4A, NS4B, NS5A and the RNA-directed RNA polymerase (By similarity).</text>
</comment>
<comment type="subcellular location">
    <molecule>Core protein precursor</molecule>
    <subcellularLocation>
        <location evidence="4">Host endoplasmic reticulum membrane</location>
        <topology evidence="13">Single-pass membrane protein</topology>
    </subcellularLocation>
    <subcellularLocation>
        <location evidence="4">Host mitochondrion membrane</location>
        <topology evidence="13">Single-pass type I membrane protein</topology>
    </subcellularLocation>
    <text>The C-terminal transmembrane domain of the core protein precursor contains an ER signal leading the nascent polyprotein to the ER membrane.</text>
</comment>
<comment type="subcellular location">
    <molecule>Mature core protein</molecule>
    <subcellularLocation>
        <location evidence="11">Virion</location>
    </subcellularLocation>
    <subcellularLocation>
        <location evidence="11">Host cytoplasm</location>
    </subcellularLocation>
    <subcellularLocation>
        <location evidence="2">Host nucleus</location>
    </subcellularLocation>
    <subcellularLocation>
        <location evidence="11">Host lipid droplet</location>
    </subcellularLocation>
    <text evidence="5">Only a minor proportion of core protein is present in the nucleus (By similarity). Probably present on the surface of lipid droplets (By similarity).</text>
</comment>
<comment type="subcellular location">
    <molecule>Envelope glycoprotein E1</molecule>
    <subcellularLocation>
        <location evidence="19">Virion membrane</location>
        <topology evidence="19">Single-pass type I membrane protein</topology>
    </subcellularLocation>
    <subcellularLocation>
        <location>Host endoplasmic reticulum membrane</location>
        <topology evidence="5">Single-pass type I membrane protein</topology>
    </subcellularLocation>
    <text evidence="5">The C-terminal transmembrane domain acts as a signal sequence and forms a hairpin structure before cleavage by host signal peptidase (By similarity). After cleavage, the membrane sequence is retained at the C-terminus of the protein, serving as ER membrane anchor (By similarity). A reorientation of the second hydrophobic stretch occurs after cleavage producing a single reoriented transmembrane domain (By similarity). These events explain the final topology of the protein (By similarity).</text>
</comment>
<comment type="subcellular location">
    <molecule>Envelope glycoprotein E2</molecule>
    <subcellularLocation>
        <location evidence="19">Virion membrane</location>
        <topology evidence="19">Single-pass type I membrane protein</topology>
    </subcellularLocation>
    <subcellularLocation>
        <location>Host endoplasmic reticulum membrane</location>
        <topology evidence="5">Single-pass type I membrane protein</topology>
    </subcellularLocation>
    <subcellularLocation>
        <location evidence="12">Host lipid droplet</location>
    </subcellularLocation>
    <text evidence="5">The C-terminal transmembrane domain acts as a signal sequence and forms a hairpin structure before cleavage by host signal peptidase (By similarity). After cleavage, the membrane sequence is retained at the C-terminus of the protein, serving as ER membrane anchor (By similarity). A reorientation of the second hydrophobic stretch occurs after cleavage producing a single reoriented transmembrane domain (By similarity). These events explain the final topology of the protein (By similarity).</text>
</comment>
<comment type="subcellular location">
    <molecule>Viroporin p7</molecule>
    <subcellularLocation>
        <location evidence="5">Host endoplasmic reticulum membrane</location>
        <topology evidence="5">Multi-pass membrane protein</topology>
    </subcellularLocation>
    <subcellularLocation>
        <location evidence="5">Host mitochondrion</location>
    </subcellularLocation>
    <subcellularLocation>
        <location evidence="5">Host cell membrane</location>
    </subcellularLocation>
    <text evidence="5">The C-terminus of p7 membrane domain acts as a signal sequence (By similarity). After cleavage by host signal peptidase, the membrane sequence is retained at the C-terminus of the protein, serving as ER membrane anchor (By similarity). ER retention of p7 is leaky and a small fraction reaches the plasma membrane (By similarity).</text>
</comment>
<comment type="subcellular location">
    <molecule>Protease NS2</molecule>
    <subcellularLocation>
        <location evidence="5">Host endoplasmic reticulum membrane</location>
        <topology evidence="5">Multi-pass membrane protein</topology>
    </subcellularLocation>
    <subcellularLocation>
        <location evidence="12">Host lipid droplet</location>
    </subcellularLocation>
    <text evidence="11">Probably present on the surface of lipid droplets.</text>
</comment>
<comment type="subcellular location">
    <molecule>Serine protease/helicase NS3</molecule>
    <subcellularLocation>
        <location evidence="19">Host endoplasmic reticulum membrane</location>
        <topology evidence="19">Peripheral membrane protein</topology>
    </subcellularLocation>
    <text evidence="19">NS3 is associated to the ER membrane through its binding to NS4A.</text>
</comment>
<comment type="subcellular location">
    <molecule>Non-structural protein 4A</molecule>
    <subcellularLocation>
        <location evidence="19">Host endoplasmic reticulum membrane</location>
        <topology evidence="19">Single-pass type I membrane protein</topology>
    </subcellularLocation>
    <text>Host membrane insertion occurs after processing by the NS3 protease.</text>
</comment>
<comment type="subcellular location">
    <molecule>Non-structural protein 4B</molecule>
    <subcellularLocation>
        <location evidence="5">Host endoplasmic reticulum membrane</location>
        <topology evidence="5">Multi-pass membrane protein</topology>
    </subcellularLocation>
    <text evidence="5">A reorientation of the N-terminus into the ER lumen occurs post-translationally.</text>
</comment>
<comment type="subcellular location">
    <molecule>Non-structural protein 5A</molecule>
    <subcellularLocation>
        <location evidence="5">Host endoplasmic reticulum membrane</location>
        <topology evidence="5">Peripheral membrane protein</topology>
    </subcellularLocation>
    <subcellularLocation>
        <location evidence="5">Host cytoplasm</location>
        <location evidence="5">Host perinuclear region</location>
    </subcellularLocation>
    <subcellularLocation>
        <location evidence="2">Host mitochondrion</location>
    </subcellularLocation>
    <subcellularLocation>
        <location evidence="5">Host cytoplasm</location>
    </subcellularLocation>
    <subcellularLocation>
        <location evidence="2">Host nucleus</location>
    </subcellularLocation>
    <subcellularLocation>
        <location evidence="12">Host lipid droplet</location>
    </subcellularLocation>
    <text evidence="2 5">Host membrane insertion occurs after processing by the NS3 protease (By similarity). Localizes at the surface of lipid droplets (By similarity).</text>
</comment>
<comment type="subcellular location">
    <molecule>RNA-directed RNA polymerase</molecule>
    <subcellularLocation>
        <location evidence="5">Host cytoplasm</location>
    </subcellularLocation>
    <subcellularLocation>
        <location>Host endoplasmic reticulum membrane</location>
        <topology evidence="5">Single-pass type IV membrane protein</topology>
    </subcellularLocation>
    <text evidence="5">Host membrane insertion occurs after processing by the NS3 protease.</text>
</comment>
<comment type="domain">
    <molecule>Envelope glycoprotein E1</molecule>
    <text evidence="5">The transmembrane regions of envelope E1 and E2 glycoproteins are involved in heterodimer formation, ER localization, and assembly of these proteins.</text>
</comment>
<comment type="domain">
    <molecule>Envelope glycoprotein E2</molecule>
    <text evidence="3 5">The transmembrane regions of envelope E1 and E2 glycoproteins are involved in heterodimer formation, ER localization, and assembly of these proteins (By similarity). Envelope E2 glycoprotein contain two highly variable regions called hypervariable region 1 and 2 (HVR1 and HVR2) (By similarity). E2 also contain two segments involved in CD81-binding (By similarity). HVR1 is implicated in the SCARB1-mediated cell entry and probably acts as a regulator of the association of particles with lipids (By similarity).</text>
</comment>
<comment type="domain">
    <molecule>Protease NS2</molecule>
    <text evidence="3">The N-terminus of NS3 is required for the catalytic activity of protease NS2 (By similarity). The minimal catalytic region includes the C-terminus of NS2 and the N-terminus NS3 protease domain (active region NS2-3) (By similarity).</text>
</comment>
<comment type="domain">
    <molecule>Serine protease/helicase NS3</molecule>
    <text evidence="2 5">The N-terminal one-third contains the protease activity (By similarity). This region contains a zinc atom that does not belong to the active site, but may play a structural rather than a catalytic role (By similarity). This region is essential for the activity of protease NS2, maybe by contributing to the folding of the latter (By similarity). The NTPase/helicase activity is located in the twothirds C-terminus of NS3, this domain contains the NTPase and RNA-binding regions (By similarity).</text>
</comment>
<comment type="domain">
    <molecule>Non-structural protein 4B</molecule>
    <text evidence="11">Contains a glycine zipper region that critically contributes to the biogenesis of functional ER-derived replication organelles.</text>
</comment>
<comment type="domain">
    <molecule>Non-structural protein 5A</molecule>
    <text evidence="2 5">The N-terminus of NS5A acts as membrane anchor (By similarity). The central part of NS5A contains a variable region called interferon sensitivity determining region (ISDR) and seems to be intrinsically disordered and interacts with NS5B and host EIF2AK2 (By similarity). The C-terminus of NS5A contains a variable region called variable region 3 (V3) (By similarity). ISDR and V3 may be involved in sensitivity and/or resistance to IFN-alpha therapy (By similarity). The C-terminus contains a nuclear localization signal (By similarity). The SH3-binding domain is involved in the interaction with host BIN1, GRB2 and Src-family kinases (By similarity).</text>
</comment>
<comment type="PTM">
    <molecule>Genome polyprotein</molecule>
    <text evidence="4 5">Specific enzymatic cleavages in vivo yield mature proteins (By similarity). The structural proteins, core, E1, E2 and p7 are produced by proteolytic processing by host signal peptidases (By similarity). The core protein precursor is synthesized as a 23 kDa, which is retained in the ER membrane through the hydrophobic signal peptide (By similarity). Cleavage by the signal peptidase releases the 21 kDa mature core protein (By similarity). The cleavage of the core protein precursor occurs between aminoacids 176 and 188 but the exact cleavage site is not known (By similarity). Some degraded forms of the core protein appear as well during the course of infection (By similarity). The other proteins (p7, NS2, NS3, NS4A, NS4B, NS5A and NS5B) are cleaved by the viral proteases (By similarity). Autoprocessing between NS2 and NS3 is mediated by the NS2 cysteine protease catalytic domain and regulated by the NS3 N-terminal domain (By similarity).</text>
</comment>
<comment type="PTM">
    <molecule>Mature core protein</molecule>
    <text evidence="7">Phosphorylated by host PKC and PKA.</text>
</comment>
<comment type="PTM">
    <molecule>Mature core protein</molecule>
    <text evidence="8">Ubiquitinated; mediated by UBE3A and leading to core protein subsequent proteasomal degradation.</text>
</comment>
<comment type="PTM">
    <molecule>Envelope glycoprotein E1</molecule>
    <text evidence="5">Highly N-glycosylated.</text>
</comment>
<comment type="PTM">
    <molecule>Envelope glycoprotein E2</molecule>
    <text evidence="5">Highly N-glycosylated.</text>
</comment>
<comment type="PTM">
    <molecule>Protease NS2</molecule>
    <text evidence="5">Palmitoylation is required for NS2/3 autoprocessing and E2 recruitment to membranes.</text>
</comment>
<comment type="PTM">
    <molecule>Non-structural protein 4B</molecule>
    <text evidence="5">Palmitoylated. This modification may play a role in its polymerization or in protein-protein interactions.</text>
</comment>
<comment type="PTM">
    <molecule>Non-structural protein 5A</molecule>
    <text evidence="2 4">Phosphorylated on serines in a basal form termed p56 (By similarity). p58 is a hyperphosphorylated form of p56 (By similarity). p56 and p58 coexist in the cell in roughly equivalent amounts (By similarity). Hyperphosphorylation is dependent on the presence of NS4A (By similarity). Host CSNK1A1/CKI-alpha or RPS6KB1 kinases may be responsible for NS5A phosphorylation (By similarity).</text>
</comment>
<comment type="PTM">
    <molecule>Non-structural protein 5A</molecule>
    <text evidence="11">Tyrosine phosphorylation is essential for the interaction with host SRC.</text>
</comment>
<comment type="PTM">
    <molecule>RNA-directed RNA polymerase</molecule>
    <text evidence="2">The N-terminus is phosphorylated by host PRK2/PKN2.</text>
</comment>
<comment type="miscellaneous">
    <text evidence="19">Viral particle assembly takes place at the surface of ER-derived membranes in close proximity to lipid droplets. NS2 associates with E1/E2 glycoproteins, NS3 and NS5A, which interacts with the viral RNA and core protein to promote genome encapsidation. The nucleocapsid buds at the ER membrane where E1/E2 glycoproteins are anchored and afterward associate with nascent lipid droplet to acquire APOE and APOC. Secretion of viral particles is probably regulated by viroporin p7.</text>
</comment>
<comment type="miscellaneous">
    <molecule>Non-structural protein 5A</molecule>
    <text evidence="19">Cell culture adaptation of the virus leads to mutations in NS5A, reducing its inhibitory effect on replication.</text>
</comment>
<comment type="miscellaneous">
    <molecule>Mature core protein</molecule>
    <text evidence="2">Exerts viral interference on hepatitis B virus when HCV and HBV coinfect the same cell, by suppressing HBV gene expression, RNA encapsidation and budding.</text>
</comment>
<comment type="similarity">
    <text evidence="19">Belongs to the hepacivirus polyprotein family.</text>
</comment>
<comment type="caution">
    <text evidence="19">The core gene probably also codes for alternative reading frame proteins (ARFPs). Many functions depicted for the core protein might belong to the ARFPs.</text>
</comment>
<feature type="initiator methionine" description="Removed; by host" evidence="4">
    <location>
        <position position="1"/>
    </location>
</feature>
<feature type="chain" id="PRO_0000450924" description="Genome polyprotein">
    <location>
        <begin position="2"/>
        <end position="3014"/>
    </location>
</feature>
<feature type="chain" id="PRO_0000045664" description="Core protein precursor" evidence="13">
    <location>
        <begin position="2"/>
        <end position="191"/>
    </location>
</feature>
<feature type="chain" id="PRO_0000045665" description="Mature core protein">
    <location>
        <begin position="2"/>
        <end position="177"/>
    </location>
</feature>
<feature type="propeptide" id="PRO_0000045666" description="ER anchor for the core protein, removed in mature form by host signal peptidase">
    <location>
        <begin position="178"/>
        <end position="191"/>
    </location>
</feature>
<feature type="chain" id="PRO_0000045667" description="Envelope glycoprotein E1">
    <location>
        <begin position="192"/>
        <end position="383"/>
    </location>
</feature>
<feature type="chain" id="PRO_0000045668" description="Envelope glycoprotein E2">
    <location>
        <begin position="384"/>
        <end position="747"/>
    </location>
</feature>
<feature type="chain" id="PRO_0000045669" description="Viroporin p7">
    <location>
        <begin position="748"/>
        <end position="810"/>
    </location>
</feature>
<feature type="chain" id="PRO_0000045670" description="Protease NS2" evidence="16">
    <location>
        <begin position="811"/>
        <end position="1027"/>
    </location>
</feature>
<feature type="chain" id="PRO_0000045671" description="Serine protease/helicase NS3">
    <location>
        <begin position="1028"/>
        <end position="1658"/>
    </location>
</feature>
<feature type="chain" id="PRO_0000045672" description="Non-structural protein 4A">
    <location>
        <begin position="1659"/>
        <end position="1712"/>
    </location>
</feature>
<feature type="chain" id="PRO_0000045673" description="Non-structural protein 4B">
    <location>
        <begin position="1713"/>
        <end position="1973"/>
    </location>
</feature>
<feature type="chain" id="PRO_0000045674" description="Non-structural protein 5A">
    <location>
        <begin position="1974"/>
        <end position="2423"/>
    </location>
</feature>
<feature type="chain" id="PRO_0000045675" description="RNA-directed RNA polymerase">
    <location>
        <begin position="2424"/>
        <end position="3014"/>
    </location>
</feature>
<feature type="topological domain" description="Cytoplasmic" evidence="13">
    <location>
        <begin position="2"/>
        <end position="168"/>
    </location>
</feature>
<feature type="transmembrane region" description="Helical" evidence="13">
    <location>
        <begin position="169"/>
        <end position="189"/>
    </location>
</feature>
<feature type="topological domain" description="Lumenal" evidence="5">
    <location>
        <begin position="190"/>
        <end position="358"/>
    </location>
</feature>
<feature type="transmembrane region" description="Helical" evidence="5">
    <location>
        <begin position="359"/>
        <end position="379"/>
    </location>
</feature>
<feature type="topological domain" description="Lumenal" evidence="5">
    <location>
        <begin position="380"/>
        <end position="726"/>
    </location>
</feature>
<feature type="transmembrane region" description="Helical" evidence="5">
    <location>
        <begin position="727"/>
        <end position="747"/>
    </location>
</feature>
<feature type="topological domain" description="Lumenal" evidence="5">
    <location>
        <begin position="748"/>
        <end position="758"/>
    </location>
</feature>
<feature type="transmembrane region" description="Helical" evidence="5">
    <location>
        <begin position="759"/>
        <end position="779"/>
    </location>
</feature>
<feature type="topological domain" description="Cytoplasmic" evidence="5">
    <location>
        <begin position="780"/>
        <end position="783"/>
    </location>
</feature>
<feature type="transmembrane region" description="Helical" evidence="5">
    <location>
        <begin position="784"/>
        <end position="804"/>
    </location>
</feature>
<feature type="topological domain" description="Lumenal" evidence="5">
    <location>
        <begin position="805"/>
        <end position="814"/>
    </location>
</feature>
<feature type="transmembrane region" description="Helical" evidence="12">
    <location>
        <begin position="815"/>
        <end position="835"/>
    </location>
</feature>
<feature type="topological domain" description="Cytoplasmic" evidence="12">
    <location>
        <begin position="836"/>
        <end position="882"/>
    </location>
</feature>
<feature type="transmembrane region" description="Helical" evidence="12">
    <location>
        <begin position="883"/>
        <end position="903"/>
    </location>
</feature>
<feature type="topological domain" description="Lumenal" evidence="12">
    <location>
        <begin position="904"/>
        <end position="929"/>
    </location>
</feature>
<feature type="transmembrane region" description="Helical" evidence="12">
    <location>
        <begin position="930"/>
        <end position="950"/>
    </location>
</feature>
<feature type="topological domain" description="Cytoplasmic" evidence="12">
    <location>
        <begin position="951"/>
        <end position="1658"/>
    </location>
</feature>
<feature type="transmembrane region" description="Helical" evidence="13">
    <location>
        <begin position="1659"/>
        <end position="1679"/>
    </location>
</feature>
<feature type="topological domain" description="Cytoplasmic" evidence="13">
    <location>
        <begin position="1680"/>
        <end position="1806"/>
    </location>
</feature>
<feature type="transmembrane region" description="Helical" evidence="13">
    <location>
        <begin position="1807"/>
        <end position="1827"/>
    </location>
</feature>
<feature type="topological domain" description="Lumenal" evidence="5">
    <location>
        <begin position="1828"/>
        <end position="1829"/>
    </location>
</feature>
<feature type="transmembrane region" description="Helical" evidence="13">
    <location>
        <begin position="1830"/>
        <end position="1850"/>
    </location>
</feature>
<feature type="topological domain" description="Cytoplasmic" evidence="13">
    <location>
        <position position="1851"/>
    </location>
</feature>
<feature type="transmembrane region" description="Helical" evidence="13">
    <location>
        <begin position="1852"/>
        <end position="1872"/>
    </location>
</feature>
<feature type="topological domain" description="Lumenal" evidence="13">
    <location>
        <begin position="1873"/>
        <end position="1882"/>
    </location>
</feature>
<feature type="transmembrane region" description="Helical" evidence="13">
    <location>
        <begin position="1883"/>
        <end position="1903"/>
    </location>
</feature>
<feature type="topological domain" description="Cytoplasmic" evidence="13">
    <location>
        <begin position="1904"/>
        <end position="1973"/>
    </location>
</feature>
<feature type="intramembrane region" evidence="5">
    <location>
        <begin position="1974"/>
        <end position="2003"/>
    </location>
</feature>
<feature type="topological domain" description="Cytoplasmic" evidence="5">
    <location>
        <begin position="2004"/>
        <end position="2993"/>
    </location>
</feature>
<feature type="transmembrane region" description="Helical" evidence="5">
    <location>
        <begin position="2994"/>
        <end position="3014"/>
    </location>
</feature>
<feature type="domain" description="Peptidase C18" evidence="16">
    <location>
        <begin position="904"/>
        <end position="1027"/>
    </location>
</feature>
<feature type="domain" description="Peptidase S29" evidence="17">
    <location>
        <begin position="1028"/>
        <end position="1209"/>
    </location>
</feature>
<feature type="domain" description="Helicase ATP-binding" evidence="15">
    <location>
        <begin position="1218"/>
        <end position="1370"/>
    </location>
</feature>
<feature type="domain" description="RdRp catalytic" evidence="14">
    <location>
        <begin position="2637"/>
        <end position="2755"/>
    </location>
</feature>
<feature type="region of interest" description="Disordered" evidence="5">
    <location>
        <begin position="2"/>
        <end position="75"/>
    </location>
</feature>
<feature type="region of interest" description="Interaction with DDX3X" evidence="9">
    <location>
        <begin position="2"/>
        <end position="59"/>
    </location>
</feature>
<feature type="region of interest" description="Interaction with EIF2AK2/PKR" evidence="2">
    <location>
        <begin position="2"/>
        <end position="58"/>
    </location>
</feature>
<feature type="region of interest" description="Interaction with STAT1" evidence="2">
    <location>
        <begin position="2"/>
        <end position="23"/>
    </location>
</feature>
<feature type="region of interest" description="Important for endoplasmic reticulum and mitochondrial localization" evidence="2">
    <location>
        <begin position="112"/>
        <end position="152"/>
    </location>
</feature>
<feature type="region of interest" description="Interaction with APOA2" evidence="6">
    <location>
        <begin position="122"/>
        <end position="173"/>
    </location>
</feature>
<feature type="region of interest" description="Important for lipid droplets localization" evidence="5">
    <location>
        <begin position="164"/>
        <end position="167"/>
    </location>
</feature>
<feature type="region of interest" description="Important for fusion" evidence="5">
    <location>
        <begin position="265"/>
        <end position="296"/>
    </location>
</feature>
<feature type="region of interest" description="HVR1" evidence="5">
    <location>
        <begin position="385"/>
        <end position="412"/>
    </location>
</feature>
<feature type="region of interest" description="HVR2" evidence="5">
    <location>
        <begin position="475"/>
        <end position="479"/>
    </location>
</feature>
<feature type="region of interest" description="CD81-binding 1" evidence="3">
    <location>
        <begin position="481"/>
        <end position="494"/>
    </location>
</feature>
<feature type="region of interest" description="CD81-binding 2" evidence="3">
    <location>
        <begin position="545"/>
        <end position="552"/>
    </location>
</feature>
<feature type="region of interest" description="PKR/eIF2-alpha phosphorylation homology domain (PePHD)">
    <location>
        <begin position="661"/>
        <end position="672"/>
    </location>
</feature>
<feature type="region of interest" description="Protease NS2-3" evidence="3">
    <location>
        <begin position="905"/>
        <end position="1207"/>
    </location>
</feature>
<feature type="region of interest" description="Interaction with host SCPS1" evidence="11">
    <location>
        <begin position="930"/>
        <end position="950"/>
    </location>
</feature>
<feature type="region of interest" description="RNA-binding" evidence="3">
    <location>
        <begin position="1487"/>
        <end position="1499"/>
    </location>
</feature>
<feature type="region of interest" description="NS3-binding" evidence="5">
    <location>
        <begin position="1680"/>
        <end position="1691"/>
    </location>
</feature>
<feature type="region of interest" description="Transcriptional activation" evidence="13">
    <location>
        <begin position="2121"/>
        <end position="2334"/>
    </location>
</feature>
<feature type="region of interest" description="FKBP8-binding" evidence="2">
    <location>
        <begin position="2121"/>
        <end position="2209"/>
    </location>
</feature>
<feature type="region of interest" description="Interaction with non-structural protein 4A" evidence="2">
    <location>
        <begin position="2136"/>
        <end position="2140"/>
    </location>
</feature>
<feature type="region of interest" description="Disordered" evidence="18">
    <location>
        <begin position="2187"/>
        <end position="2219"/>
    </location>
</feature>
<feature type="region of interest" description="Interaction with host SKP2" evidence="5">
    <location>
        <begin position="2190"/>
        <end position="2441"/>
    </location>
</feature>
<feature type="region of interest" description="Interaction with EIF2AK2/PKR" evidence="3">
    <location>
        <begin position="2211"/>
        <end position="2276"/>
    </location>
</feature>
<feature type="region of interest" description="ISDR" evidence="2">
    <location>
        <begin position="2211"/>
        <end position="2250"/>
    </location>
</feature>
<feature type="region of interest" description="NS4B-binding" evidence="13">
    <location>
        <begin position="2250"/>
        <end position="2307"/>
    </location>
</feature>
<feature type="region of interest" description="V3">
    <location>
        <begin position="2300"/>
        <end position="2378"/>
    </location>
</feature>
<feature type="region of interest" description="Disordered" evidence="18">
    <location>
        <begin position="2301"/>
        <end position="2337"/>
    </location>
</feature>
<feature type="region of interest" description="Disordered" evidence="18">
    <location>
        <begin position="2358"/>
        <end position="2413"/>
    </location>
</feature>
<feature type="short sequence motif" description="Nuclear localization signal" evidence="11">
    <location>
        <begin position="5"/>
        <end position="13"/>
    </location>
</feature>
<feature type="short sequence motif" description="Nuclear localization signal" evidence="11">
    <location>
        <begin position="38"/>
        <end position="43"/>
    </location>
</feature>
<feature type="short sequence motif" description="Nuclear localization signal" evidence="11">
    <location>
        <begin position="58"/>
        <end position="64"/>
    </location>
</feature>
<feature type="short sequence motif" description="Nuclear localization signal" evidence="11">
    <location>
        <begin position="66"/>
        <end position="71"/>
    </location>
</feature>
<feature type="short sequence motif" description="DECH box" evidence="11">
    <location>
        <begin position="1317"/>
        <end position="1320"/>
    </location>
</feature>
<feature type="short sequence motif" description="SH3-binding" evidence="13">
    <location>
        <begin position="2323"/>
        <end position="2326"/>
    </location>
</feature>
<feature type="short sequence motif" description="Nuclear localization signal" evidence="2">
    <location>
        <begin position="2328"/>
        <end position="2337"/>
    </location>
</feature>
<feature type="compositionally biased region" description="Basic residues" evidence="18">
    <location>
        <begin position="7"/>
        <end position="16"/>
    </location>
</feature>
<feature type="compositionally biased region" description="Low complexity" evidence="18">
    <location>
        <begin position="32"/>
        <end position="47"/>
    </location>
</feature>
<feature type="compositionally biased region" description="Low complexity" evidence="18">
    <location>
        <begin position="2195"/>
        <end position="2212"/>
    </location>
</feature>
<feature type="compositionally biased region" description="Pro residues" evidence="18">
    <location>
        <begin position="2316"/>
        <end position="2327"/>
    </location>
</feature>
<feature type="compositionally biased region" description="Polar residues" evidence="18">
    <location>
        <begin position="2358"/>
        <end position="2375"/>
    </location>
</feature>
<feature type="active site" description="For protease NS2 activity; shared with dimeric partner" evidence="16">
    <location>
        <position position="953"/>
    </location>
</feature>
<feature type="active site" description="For protease NS2 activity; shared with dimeric partner" evidence="16">
    <location>
        <position position="973"/>
    </location>
</feature>
<feature type="active site" description="For protease NS2 activity; shared with dimeric partner" evidence="16">
    <location>
        <position position="994"/>
    </location>
</feature>
<feature type="active site" description="Charge relay system; for serine protease NS3 activity" evidence="17">
    <location>
        <position position="1084"/>
    </location>
</feature>
<feature type="active site" description="Charge relay system; for serine protease NS3 activity" evidence="17">
    <location>
        <position position="1108"/>
    </location>
</feature>
<feature type="active site" description="Charge relay system; for serine protease NS3 activity" evidence="17">
    <location>
        <position position="1166"/>
    </location>
</feature>
<feature type="binding site" evidence="17">
    <location>
        <position position="1124"/>
    </location>
    <ligand>
        <name>Zn(2+)</name>
        <dbReference type="ChEBI" id="CHEBI:29105"/>
        <label>1</label>
        <note>structural; for NS3 protease activity and NS2/3 auto-cleavage activity</note>
    </ligand>
</feature>
<feature type="binding site" evidence="17">
    <location>
        <position position="1126"/>
    </location>
    <ligand>
        <name>Zn(2+)</name>
        <dbReference type="ChEBI" id="CHEBI:29105"/>
        <label>1</label>
        <note>structural; for NS3 protease activity and NS2/3 auto-cleavage activity</note>
    </ligand>
</feature>
<feature type="binding site" evidence="17">
    <location>
        <position position="1172"/>
    </location>
    <ligand>
        <name>Zn(2+)</name>
        <dbReference type="ChEBI" id="CHEBI:29105"/>
        <label>1</label>
        <note>structural; for NS3 protease activity and NS2/3 auto-cleavage activity</note>
    </ligand>
</feature>
<feature type="binding site" evidence="17">
    <location>
        <position position="1176"/>
    </location>
    <ligand>
        <name>Zn(2+)</name>
        <dbReference type="ChEBI" id="CHEBI:29105"/>
        <label>1</label>
        <note>structural; for NS3 protease activity and NS2/3 auto-cleavage activity</note>
    </ligand>
</feature>
<feature type="binding site" evidence="15">
    <location>
        <begin position="1231"/>
        <end position="1238"/>
    </location>
    <ligand>
        <name>ATP</name>
        <dbReference type="ChEBI" id="CHEBI:30616"/>
    </ligand>
</feature>
<feature type="binding site" evidence="12">
    <location>
        <position position="1238"/>
    </location>
    <ligand>
        <name>Mg(2+)</name>
        <dbReference type="ChEBI" id="CHEBI:18420"/>
        <label>1</label>
        <note>catalytic; for NS3 helicase activity</note>
    </ligand>
</feature>
<feature type="binding site" evidence="12">
    <location>
        <position position="1318"/>
    </location>
    <ligand>
        <name>Mg(2+)</name>
        <dbReference type="ChEBI" id="CHEBI:18420"/>
        <label>1</label>
        <note>catalytic; for NS3 helicase activity</note>
    </ligand>
</feature>
<feature type="binding site" evidence="12">
    <location>
        <position position="2012"/>
    </location>
    <ligand>
        <name>Zn(2+)</name>
        <dbReference type="ChEBI" id="CHEBI:29105"/>
        <label>2</label>
        <note>structural</note>
    </ligand>
</feature>
<feature type="binding site" evidence="12">
    <location>
        <position position="2030"/>
    </location>
    <ligand>
        <name>Zn(2+)</name>
        <dbReference type="ChEBI" id="CHEBI:29105"/>
        <label>2</label>
        <note>structural</note>
    </ligand>
</feature>
<feature type="binding site" evidence="12">
    <location>
        <position position="2032"/>
    </location>
    <ligand>
        <name>Zn(2+)</name>
        <dbReference type="ChEBI" id="CHEBI:29105"/>
        <label>2</label>
        <note>structural</note>
    </ligand>
</feature>
<feature type="binding site" evidence="12">
    <location>
        <position position="2053"/>
    </location>
    <ligand>
        <name>Zn(2+)</name>
        <dbReference type="ChEBI" id="CHEBI:29105"/>
        <label>2</label>
        <note>structural</note>
    </ligand>
</feature>
<feature type="binding site" evidence="3">
    <location>
        <position position="2643"/>
    </location>
    <ligand>
        <name>Mg(2+)</name>
        <dbReference type="ChEBI" id="CHEBI:18420"/>
        <label>2</label>
        <note>catalytic; for RNA-directed RNA polymerase activity</note>
    </ligand>
</feature>
<feature type="binding site" evidence="3">
    <location>
        <position position="2741"/>
    </location>
    <ligand>
        <name>Mg(2+)</name>
        <dbReference type="ChEBI" id="CHEBI:18420"/>
        <label>2</label>
        <note>catalytic; for RNA-directed RNA polymerase activity</note>
    </ligand>
</feature>
<feature type="binding site" evidence="3">
    <location>
        <position position="2742"/>
    </location>
    <ligand>
        <name>Mg(2+)</name>
        <dbReference type="ChEBI" id="CHEBI:18420"/>
        <label>2</label>
        <note>catalytic; for RNA-directed RNA polymerase activity</note>
    </ligand>
</feature>
<feature type="site" description="Cleavage; by host signal peptide peptidase" evidence="2">
    <location>
        <begin position="177"/>
        <end position="178"/>
    </location>
</feature>
<feature type="site" description="Cleavage; by host signal peptidase" evidence="2">
    <location>
        <begin position="191"/>
        <end position="192"/>
    </location>
</feature>
<feature type="site" description="Cleavage; by host signal peptidase" evidence="2">
    <location>
        <begin position="383"/>
        <end position="384"/>
    </location>
</feature>
<feature type="site" description="Cleavage; by host signal peptidase">
    <location>
        <begin position="747"/>
        <end position="748"/>
    </location>
</feature>
<feature type="site" description="Cleavage; by host signal peptidase">
    <location>
        <begin position="810"/>
        <end position="811"/>
    </location>
</feature>
<feature type="site" description="Cleavage; by protease NS2" evidence="16">
    <location>
        <begin position="1027"/>
        <end position="1028"/>
    </location>
</feature>
<feature type="site" description="Cleavage; by serine protease NS3" evidence="5">
    <location>
        <begin position="1658"/>
        <end position="1659"/>
    </location>
</feature>
<feature type="site" description="Cleavage; by serine protease NS3" evidence="5">
    <location>
        <begin position="1712"/>
        <end position="1713"/>
    </location>
</feature>
<feature type="site" description="Cleavage; by serine protease NS3" evidence="5">
    <location>
        <begin position="1973"/>
        <end position="1974"/>
    </location>
</feature>
<feature type="site" description="Cleavage; by serine protease NS3" evidence="5">
    <location>
        <begin position="2423"/>
        <end position="2424"/>
    </location>
</feature>
<feature type="modified residue" description="N-acetylserine; by host" evidence="10">
    <location>
        <position position="2"/>
    </location>
</feature>
<feature type="modified residue" description="Phosphoserine; by host" evidence="7">
    <location>
        <position position="53"/>
    </location>
</feature>
<feature type="modified residue" description="Phosphoserine; by host" evidence="7">
    <location>
        <position position="99"/>
    </location>
</feature>
<feature type="modified residue" description="Phosphoserine; by host" evidence="7">
    <location>
        <position position="116"/>
    </location>
</feature>
<feature type="modified residue" description="Phosphoserine; by host" evidence="12">
    <location>
        <position position="2195"/>
    </location>
</feature>
<feature type="modified residue" description="Phosphoserine; by host" evidence="12">
    <location>
        <position position="2198"/>
    </location>
</feature>
<feature type="modified residue" description="Phosphoserine; by host" evidence="12">
    <location>
        <position position="2202"/>
    </location>
</feature>
<feature type="modified residue" description="Phosphoserine; by host" evidence="12">
    <location>
        <position position="2205"/>
    </location>
</feature>
<feature type="modified residue" description="Phosphoserine; by host" evidence="11">
    <location>
        <position position="2208"/>
    </location>
</feature>
<feature type="modified residue" description="Phosphoserine; by host" evidence="11">
    <location>
        <position position="2211"/>
    </location>
</feature>
<feature type="modified residue" description="Phosphoserine; by host" evidence="2">
    <location>
        <position position="2465"/>
    </location>
</feature>
<feature type="lipid moiety-binding region" description="S-palmitoyl cysteine; by host" evidence="5">
    <location>
        <position position="923"/>
    </location>
</feature>
<feature type="lipid moiety-binding region" description="S-palmitoyl cysteine; by host" evidence="5">
    <location>
        <position position="1973"/>
    </location>
</feature>
<feature type="glycosylation site" description="N-linked (GlcNAc...) asparagine; by host" evidence="5">
    <location>
        <position position="196"/>
    </location>
</feature>
<feature type="glycosylation site" description="N-linked (GlcNAc...) asparagine; by host" evidence="5">
    <location>
        <position position="209"/>
    </location>
</feature>
<feature type="glycosylation site" description="N-linked (GlcNAc...) asparagine; by host" evidence="5">
    <location>
        <position position="234"/>
    </location>
</feature>
<feature type="glycosylation site" description="N-linked (GlcNAc...) asparagine; by host" evidence="5">
    <location>
        <position position="305"/>
    </location>
</feature>
<feature type="glycosylation site" description="N-linked (GlcNAc...) (high mannose) asparagine; by host" evidence="5">
    <location>
        <position position="417"/>
    </location>
</feature>
<feature type="glycosylation site" description="N-linked (GlcNAc...) (high mannose) asparagine; by host" evidence="5">
    <location>
        <position position="423"/>
    </location>
</feature>
<feature type="glycosylation site" description="N-linked (GlcNAc...) (high mannose) asparagine; by host" evidence="5">
    <location>
        <position position="430"/>
    </location>
</feature>
<feature type="glycosylation site" description="N-linked (GlcNAc...) asparagine; by host" evidence="13">
    <location>
        <position position="448"/>
    </location>
</feature>
<feature type="glycosylation site" description="N-linked (GlcNAc...) asparagine; by host" evidence="13">
    <location>
        <position position="533"/>
    </location>
</feature>
<feature type="glycosylation site" description="N-linked (GlcNAc...) asparagine; by host" evidence="13">
    <location>
        <position position="557"/>
    </location>
</feature>
<feature type="glycosylation site" description="N-linked (GlcNAc...) asparagine; by host" evidence="13">
    <location>
        <position position="578"/>
    </location>
</feature>
<feature type="glycosylation site" description="N-linked (GlcNAc...) (high mannose) asparagine; by host" evidence="5">
    <location>
        <position position="624"/>
    </location>
</feature>
<feature type="glycosylation site" description="N-linked (GlcNAc...) (high mannose) asparagine; by host" evidence="5">
    <location>
        <position position="646"/>
    </location>
</feature>
<feature type="disulfide bond" evidence="5">
    <location>
        <begin position="429"/>
        <end position="553"/>
    </location>
</feature>
<feature type="disulfide bond" evidence="5">
    <location>
        <begin position="452"/>
        <end position="459"/>
    </location>
</feature>
<feature type="disulfide bond" evidence="5">
    <location>
        <begin position="487"/>
        <end position="495"/>
    </location>
</feature>
<feature type="disulfide bond" evidence="5">
    <location>
        <begin position="504"/>
        <end position="509"/>
    </location>
</feature>
<feature type="disulfide bond" evidence="5">
    <location>
        <begin position="565"/>
        <end position="570"/>
    </location>
</feature>
<feature type="disulfide bond" evidence="5">
    <location>
        <begin position="582"/>
        <end position="586"/>
    </location>
</feature>
<feature type="disulfide bond" evidence="5">
    <location>
        <begin position="598"/>
        <end position="621"/>
    </location>
</feature>
<feature type="disulfide bond" evidence="5">
    <location>
        <begin position="608"/>
        <end position="645"/>
    </location>
</feature>
<feature type="disulfide bond" evidence="5">
    <location>
        <begin position="653"/>
        <end position="678"/>
    </location>
</feature>
<reference key="1">
    <citation type="journal article" date="1998" name="J. Infect. Dis.">
        <title>Experimental infection of chimpanzees with hepatitis C virus of genotype 5a: genetic analysis of the virus and generation of a standardized challenge pool.</title>
        <authorList>
            <person name="Bukh J."/>
            <person name="Apgar C.L."/>
            <person name="Engle R."/>
            <person name="Govindarajan S."/>
            <person name="Hegerich P.A."/>
            <person name="Tellier R."/>
            <person name="Wong D.C."/>
            <person name="Elkins R."/>
            <person name="Kew M.C."/>
        </authorList>
    </citation>
    <scope>NUCLEOTIDE SEQUENCE [GENOMIC RNA]</scope>
</reference>
<reference key="2">
    <citation type="journal article" date="2000" name="J. Viral Hepat.">
        <title>Properties of the hepatitis C virus core protein: a structural protein that modulates cellular processes.</title>
        <authorList>
            <person name="McLauchlan J."/>
        </authorList>
    </citation>
    <scope>REVIEW</scope>
</reference>
<reference key="3">
    <citation type="journal article" date="2004" name="Hepatology">
        <title>Structural biology of hepatitis C virus.</title>
        <authorList>
            <person name="Penin F."/>
            <person name="Dubuisson J."/>
            <person name="Rey F.A."/>
            <person name="Moradpour D."/>
            <person name="Pawlotsky J.-M."/>
        </authorList>
    </citation>
    <scope>REVIEW</scope>
</reference>
<proteinExistence type="inferred from homology"/>
<organism>
    <name type="scientific">Hepatitis C virus genotype 5a (isolate SA13)</name>
    <name type="common">HCV</name>
    <dbReference type="NCBI Taxonomy" id="356390"/>
    <lineage>
        <taxon>Viruses</taxon>
        <taxon>Riboviria</taxon>
        <taxon>Orthornavirae</taxon>
        <taxon>Kitrinoviricota</taxon>
        <taxon>Flasuviricetes</taxon>
        <taxon>Amarillovirales</taxon>
        <taxon>Flaviviridae</taxon>
        <taxon>Hepacivirus</taxon>
        <taxon>Hepacivirus hominis</taxon>
    </lineage>
</organism>
<protein>
    <recommendedName>
        <fullName>Genome polyprotein</fullName>
    </recommendedName>
    <component>
        <recommendedName>
            <fullName>Core protein precursor</fullName>
        </recommendedName>
        <alternativeName>
            <fullName>Capsid protein C</fullName>
        </alternativeName>
        <alternativeName>
            <fullName>p23</fullName>
        </alternativeName>
    </component>
    <component>
        <recommendedName>
            <fullName>Mature core protein</fullName>
        </recommendedName>
        <alternativeName>
            <fullName>p21</fullName>
        </alternativeName>
    </component>
    <component>
        <recommendedName>
            <fullName>Envelope glycoprotein E1</fullName>
        </recommendedName>
        <alternativeName>
            <fullName>gp32</fullName>
        </alternativeName>
        <alternativeName>
            <fullName>gp35</fullName>
        </alternativeName>
    </component>
    <component>
        <recommendedName>
            <fullName>Envelope glycoprotein E2</fullName>
        </recommendedName>
        <alternativeName>
            <fullName>NS1</fullName>
        </alternativeName>
        <alternativeName>
            <fullName>gp68</fullName>
        </alternativeName>
        <alternativeName>
            <fullName>gp70</fullName>
        </alternativeName>
    </component>
    <component>
        <recommendedName>
            <fullName>Viroporin p7</fullName>
        </recommendedName>
    </component>
    <component>
        <recommendedName>
            <fullName>Protease NS2</fullName>
            <shortName>p23</shortName>
            <ecNumber evidence="3">3.4.22.-</ecNumber>
        </recommendedName>
        <alternativeName>
            <fullName>Non-structural protein 2</fullName>
            <shortName>NS2</shortName>
        </alternativeName>
    </component>
    <component>
        <recommendedName>
            <fullName>Serine protease/helicase NS3</fullName>
            <ecNumber evidence="5">3.4.21.98</ecNumber>
            <ecNumber evidence="5">3.6.1.15</ecNumber>
            <ecNumber evidence="5">3.6.4.13</ecNumber>
        </recommendedName>
        <alternativeName>
            <fullName>Hepacivirin</fullName>
        </alternativeName>
        <alternativeName>
            <fullName evidence="5">NS3 helicase</fullName>
        </alternativeName>
        <alternativeName>
            <fullName evidence="5">NS3 protease</fullName>
        </alternativeName>
        <alternativeName>
            <fullName>NS3P</fullName>
        </alternativeName>
        <alternativeName>
            <fullName>Viroporin p70</fullName>
        </alternativeName>
    </component>
    <component>
        <recommendedName>
            <fullName>Non-structural protein 4A</fullName>
            <shortName>NS4A</shortName>
        </recommendedName>
        <alternativeName>
            <fullName>p8</fullName>
        </alternativeName>
    </component>
    <component>
        <recommendedName>
            <fullName>Non-structural protein 4B</fullName>
            <shortName>NS4B</shortName>
        </recommendedName>
        <alternativeName>
            <fullName>p27</fullName>
        </alternativeName>
    </component>
    <component>
        <recommendedName>
            <fullName>Non-structural protein 5A</fullName>
            <shortName>NS5A</shortName>
        </recommendedName>
        <alternativeName>
            <fullName>p56/58</fullName>
        </alternativeName>
    </component>
    <component>
        <recommendedName>
            <fullName>RNA-directed RNA polymerase</fullName>
            <ecNumber evidence="5">2.7.7.48</ecNumber>
        </recommendedName>
        <alternativeName>
            <fullName>NS5B</fullName>
        </alternativeName>
        <alternativeName>
            <fullName>p68</fullName>
        </alternativeName>
    </component>
</protein>
<organismHost>
    <name type="scientific">Homo sapiens</name>
    <name type="common">Human</name>
    <dbReference type="NCBI Taxonomy" id="9606"/>
</organismHost>
<evidence type="ECO:0000250" key="1">
    <source>
        <dbReference type="UniProtKB" id="O92972"/>
    </source>
</evidence>
<evidence type="ECO:0000250" key="2">
    <source>
        <dbReference type="UniProtKB" id="P26662"/>
    </source>
</evidence>
<evidence type="ECO:0000250" key="3">
    <source>
        <dbReference type="UniProtKB" id="P26663"/>
    </source>
</evidence>
<evidence type="ECO:0000250" key="4">
    <source>
        <dbReference type="UniProtKB" id="P26664"/>
    </source>
</evidence>
<evidence type="ECO:0000250" key="5">
    <source>
        <dbReference type="UniProtKB" id="P27958"/>
    </source>
</evidence>
<evidence type="ECO:0000250" key="6">
    <source>
        <dbReference type="UniProtKB" id="P29846"/>
    </source>
</evidence>
<evidence type="ECO:0000250" key="7">
    <source>
        <dbReference type="UniProtKB" id="Q01403"/>
    </source>
</evidence>
<evidence type="ECO:0000250" key="8">
    <source>
        <dbReference type="UniProtKB" id="Q03463"/>
    </source>
</evidence>
<evidence type="ECO:0000250" key="9">
    <source>
        <dbReference type="UniProtKB" id="Q5EG65"/>
    </source>
</evidence>
<evidence type="ECO:0000250" key="10">
    <source>
        <dbReference type="UniProtKB" id="Q913V3"/>
    </source>
</evidence>
<evidence type="ECO:0000250" key="11">
    <source>
        <dbReference type="UniProtKB" id="Q99IB8"/>
    </source>
</evidence>
<evidence type="ECO:0000250" key="12">
    <source>
        <dbReference type="UniProtKB" id="Q9WMX2"/>
    </source>
</evidence>
<evidence type="ECO:0000255" key="13"/>
<evidence type="ECO:0000255" key="14">
    <source>
        <dbReference type="PROSITE-ProRule" id="PRU00539"/>
    </source>
</evidence>
<evidence type="ECO:0000255" key="15">
    <source>
        <dbReference type="PROSITE-ProRule" id="PRU00541"/>
    </source>
</evidence>
<evidence type="ECO:0000255" key="16">
    <source>
        <dbReference type="PROSITE-ProRule" id="PRU01030"/>
    </source>
</evidence>
<evidence type="ECO:0000255" key="17">
    <source>
        <dbReference type="PROSITE-ProRule" id="PRU01166"/>
    </source>
</evidence>
<evidence type="ECO:0000256" key="18">
    <source>
        <dbReference type="SAM" id="MobiDB-lite"/>
    </source>
</evidence>
<evidence type="ECO:0000305" key="19"/>
<name>POLG_HCVSA</name>
<keyword id="KW-0007">Acetylation</keyword>
<keyword id="KW-1072">Activation of host autophagy by virus</keyword>
<keyword id="KW-0053">Apoptosis</keyword>
<keyword id="KW-0067">ATP-binding</keyword>
<keyword id="KW-0167">Capsid protein</keyword>
<keyword id="KW-1165">Clathrin-mediated endocytosis of virus by host</keyword>
<keyword id="KW-1015">Disulfide bond</keyword>
<keyword id="KW-1170">Fusion of virus membrane with host endosomal membrane</keyword>
<keyword id="KW-1168">Fusion of virus membrane with host membrane</keyword>
<keyword id="KW-1078">G1/S host cell cycle checkpoint dysregulation by virus</keyword>
<keyword id="KW-0325">Glycoprotein</keyword>
<keyword id="KW-0347">Helicase</keyword>
<keyword id="KW-1032">Host cell membrane</keyword>
<keyword id="KW-1035">Host cytoplasm</keyword>
<keyword id="KW-1038">Host endoplasmic reticulum</keyword>
<keyword id="KW-1041">Host lipid droplet</keyword>
<keyword id="KW-1043">Host membrane</keyword>
<keyword id="KW-1045">Host mitochondrion</keyword>
<keyword id="KW-1048">Host nucleus</keyword>
<keyword id="KW-0945">Host-virus interaction</keyword>
<keyword id="KW-0378">Hydrolase</keyword>
<keyword id="KW-1090">Inhibition of host innate immune response by virus</keyword>
<keyword id="KW-1114">Inhibition of host interferon signaling pathway by virus</keyword>
<keyword id="KW-1097">Inhibition of host MAVS by virus</keyword>
<keyword id="KW-1113">Inhibition of host RLR pathway by virus</keyword>
<keyword id="KW-1105">Inhibition of host STAT1 by virus</keyword>
<keyword id="KW-1110">Inhibition of host TRAFs by virus</keyword>
<keyword id="KW-0922">Interferon antiviral system evasion</keyword>
<keyword id="KW-0407">Ion channel</keyword>
<keyword id="KW-0406">Ion transport</keyword>
<keyword id="KW-1017">Isopeptide bond</keyword>
<keyword id="KW-0449">Lipoprotein</keyword>
<keyword id="KW-0460">Magnesium</keyword>
<keyword id="KW-0472">Membrane</keyword>
<keyword id="KW-0479">Metal-binding</keyword>
<keyword id="KW-1121">Modulation of host cell cycle by virus</keyword>
<keyword id="KW-0511">Multifunctional enzyme</keyword>
<keyword id="KW-0547">Nucleotide-binding</keyword>
<keyword id="KW-0548">Nucleotidyltransferase</keyword>
<keyword id="KW-0553">Oncogene</keyword>
<keyword id="KW-0564">Palmitate</keyword>
<keyword id="KW-0597">Phosphoprotein</keyword>
<keyword id="KW-0645">Protease</keyword>
<keyword id="KW-0687">Ribonucleoprotein</keyword>
<keyword id="KW-0694">RNA-binding</keyword>
<keyword id="KW-0696">RNA-directed RNA polymerase</keyword>
<keyword id="KW-0720">Serine protease</keyword>
<keyword id="KW-0729">SH3-binding</keyword>
<keyword id="KW-0788">Thiol protease</keyword>
<keyword id="KW-0804">Transcription</keyword>
<keyword id="KW-0805">Transcription regulation</keyword>
<keyword id="KW-0808">Transferase</keyword>
<keyword id="KW-0812">Transmembrane</keyword>
<keyword id="KW-1133">Transmembrane helix</keyword>
<keyword id="KW-0813">Transport</keyword>
<keyword id="KW-0832">Ubl conjugation</keyword>
<keyword id="KW-1161">Viral attachment to host cell</keyword>
<keyword id="KW-0261">Viral envelope protein</keyword>
<keyword id="KW-0899">Viral immunoevasion</keyword>
<keyword id="KW-1182">Viral ion channel</keyword>
<keyword id="KW-0543">Viral nucleoprotein</keyword>
<keyword id="KW-1162">Viral penetration into host cytoplasm</keyword>
<keyword id="KW-0693">Viral RNA replication</keyword>
<keyword id="KW-0946">Virion</keyword>
<keyword id="KW-1164">Virus endocytosis by host</keyword>
<keyword id="KW-1160">Virus entry into host cell</keyword>
<keyword id="KW-0862">Zinc</keyword>
<dbReference type="EC" id="3.4.22.-" evidence="3"/>
<dbReference type="EC" id="3.4.21.98" evidence="5"/>
<dbReference type="EC" id="3.6.1.15" evidence="5"/>
<dbReference type="EC" id="3.6.4.13" evidence="5"/>
<dbReference type="EC" id="2.7.7.48" evidence="5"/>
<dbReference type="EMBL" id="AF064490">
    <property type="protein sequence ID" value="AAC61696.1"/>
    <property type="molecule type" value="Genomic_RNA"/>
</dbReference>
<dbReference type="BMRB" id="O91936"/>
<dbReference type="SMR" id="O91936"/>
<dbReference type="DrugCentral" id="O91936"/>
<dbReference type="MEROPS" id="C18.001"/>
<dbReference type="euHCVdb" id="AF064490"/>
<dbReference type="BRENDA" id="3.4.21.98">
    <property type="organism ID" value="17006"/>
</dbReference>
<dbReference type="Proteomes" id="UP000008101">
    <property type="component" value="Genome"/>
</dbReference>
<dbReference type="GO" id="GO:0044167">
    <property type="term" value="C:host cell endoplasmic reticulum membrane"/>
    <property type="evidence" value="ECO:0007669"/>
    <property type="project" value="UniProtKB-SubCell"/>
</dbReference>
<dbReference type="GO" id="GO:0044186">
    <property type="term" value="C:host cell lipid droplet"/>
    <property type="evidence" value="ECO:0007669"/>
    <property type="project" value="UniProtKB-SubCell"/>
</dbReference>
<dbReference type="GO" id="GO:0044191">
    <property type="term" value="C:host cell mitochondrial membrane"/>
    <property type="evidence" value="ECO:0007669"/>
    <property type="project" value="UniProtKB-SubCell"/>
</dbReference>
<dbReference type="GO" id="GO:0042025">
    <property type="term" value="C:host cell nucleus"/>
    <property type="evidence" value="ECO:0007669"/>
    <property type="project" value="UniProtKB-SubCell"/>
</dbReference>
<dbReference type="GO" id="GO:0044220">
    <property type="term" value="C:host cell perinuclear region of cytoplasm"/>
    <property type="evidence" value="ECO:0007669"/>
    <property type="project" value="UniProtKB-SubCell"/>
</dbReference>
<dbReference type="GO" id="GO:0020002">
    <property type="term" value="C:host cell plasma membrane"/>
    <property type="evidence" value="ECO:0007669"/>
    <property type="project" value="UniProtKB-SubCell"/>
</dbReference>
<dbReference type="GO" id="GO:0016020">
    <property type="term" value="C:membrane"/>
    <property type="evidence" value="ECO:0007669"/>
    <property type="project" value="UniProtKB-KW"/>
</dbReference>
<dbReference type="GO" id="GO:1990904">
    <property type="term" value="C:ribonucleoprotein complex"/>
    <property type="evidence" value="ECO:0007669"/>
    <property type="project" value="UniProtKB-KW"/>
</dbReference>
<dbReference type="GO" id="GO:0019031">
    <property type="term" value="C:viral envelope"/>
    <property type="evidence" value="ECO:0007669"/>
    <property type="project" value="UniProtKB-KW"/>
</dbReference>
<dbReference type="GO" id="GO:0019013">
    <property type="term" value="C:viral nucleocapsid"/>
    <property type="evidence" value="ECO:0007669"/>
    <property type="project" value="UniProtKB-KW"/>
</dbReference>
<dbReference type="GO" id="GO:0055036">
    <property type="term" value="C:virion membrane"/>
    <property type="evidence" value="ECO:0007669"/>
    <property type="project" value="UniProtKB-SubCell"/>
</dbReference>
<dbReference type="GO" id="GO:0005524">
    <property type="term" value="F:ATP binding"/>
    <property type="evidence" value="ECO:0007669"/>
    <property type="project" value="UniProtKB-KW"/>
</dbReference>
<dbReference type="GO" id="GO:0016887">
    <property type="term" value="F:ATP hydrolysis activity"/>
    <property type="evidence" value="ECO:0007669"/>
    <property type="project" value="RHEA"/>
</dbReference>
<dbReference type="GO" id="GO:0015267">
    <property type="term" value="F:channel activity"/>
    <property type="evidence" value="ECO:0007669"/>
    <property type="project" value="UniProtKB-KW"/>
</dbReference>
<dbReference type="GO" id="GO:0004197">
    <property type="term" value="F:cysteine-type endopeptidase activity"/>
    <property type="evidence" value="ECO:0007669"/>
    <property type="project" value="InterPro"/>
</dbReference>
<dbReference type="GO" id="GO:0003723">
    <property type="term" value="F:RNA binding"/>
    <property type="evidence" value="ECO:0007669"/>
    <property type="project" value="UniProtKB-KW"/>
</dbReference>
<dbReference type="GO" id="GO:0003724">
    <property type="term" value="F:RNA helicase activity"/>
    <property type="evidence" value="ECO:0007669"/>
    <property type="project" value="UniProtKB-EC"/>
</dbReference>
<dbReference type="GO" id="GO:0003968">
    <property type="term" value="F:RNA-directed RNA polymerase activity"/>
    <property type="evidence" value="ECO:0007669"/>
    <property type="project" value="UniProtKB-KW"/>
</dbReference>
<dbReference type="GO" id="GO:0004252">
    <property type="term" value="F:serine-type endopeptidase activity"/>
    <property type="evidence" value="ECO:0007669"/>
    <property type="project" value="InterPro"/>
</dbReference>
<dbReference type="GO" id="GO:0017124">
    <property type="term" value="F:SH3 domain binding"/>
    <property type="evidence" value="ECO:0007669"/>
    <property type="project" value="UniProtKB-KW"/>
</dbReference>
<dbReference type="GO" id="GO:0005198">
    <property type="term" value="F:structural molecule activity"/>
    <property type="evidence" value="ECO:0007669"/>
    <property type="project" value="InterPro"/>
</dbReference>
<dbReference type="GO" id="GO:0008270">
    <property type="term" value="F:zinc ion binding"/>
    <property type="evidence" value="ECO:0007669"/>
    <property type="project" value="InterPro"/>
</dbReference>
<dbReference type="GO" id="GO:0075512">
    <property type="term" value="P:clathrin-dependent endocytosis of virus by host cell"/>
    <property type="evidence" value="ECO:0007669"/>
    <property type="project" value="UniProtKB-KW"/>
</dbReference>
<dbReference type="GO" id="GO:0039654">
    <property type="term" value="P:fusion of virus membrane with host endosome membrane"/>
    <property type="evidence" value="ECO:0007669"/>
    <property type="project" value="UniProtKB-KW"/>
</dbReference>
<dbReference type="GO" id="GO:0034220">
    <property type="term" value="P:monoatomic ion transmembrane transport"/>
    <property type="evidence" value="ECO:0007669"/>
    <property type="project" value="UniProtKB-KW"/>
</dbReference>
<dbReference type="GO" id="GO:0006508">
    <property type="term" value="P:proteolysis"/>
    <property type="evidence" value="ECO:0007669"/>
    <property type="project" value="UniProtKB-KW"/>
</dbReference>
<dbReference type="GO" id="GO:0039520">
    <property type="term" value="P:symbiont-mediated activation of host autophagy"/>
    <property type="evidence" value="ECO:0007669"/>
    <property type="project" value="UniProtKB-KW"/>
</dbReference>
<dbReference type="GO" id="GO:0039645">
    <property type="term" value="P:symbiont-mediated perturbation of host cell cycle G1/S transition checkpoint"/>
    <property type="evidence" value="ECO:0007669"/>
    <property type="project" value="UniProtKB-KW"/>
</dbReference>
<dbReference type="GO" id="GO:0039545">
    <property type="term" value="P:symbiont-mediated suppression of host cytoplasmic pattern recognition receptor signaling pathway via inhibition of MAVS activity"/>
    <property type="evidence" value="ECO:0007669"/>
    <property type="project" value="UniProtKB-KW"/>
</dbReference>
<dbReference type="GO" id="GO:0039563">
    <property type="term" value="P:symbiont-mediated suppression of host JAK-STAT cascade via inhibition of STAT1 activity"/>
    <property type="evidence" value="ECO:0007669"/>
    <property type="project" value="UniProtKB-KW"/>
</dbReference>
<dbReference type="GO" id="GO:0039527">
    <property type="term" value="P:symbiont-mediated suppression of host TRAF-mediated signal transduction"/>
    <property type="evidence" value="ECO:0007669"/>
    <property type="project" value="UniProtKB-KW"/>
</dbReference>
<dbReference type="GO" id="GO:0039502">
    <property type="term" value="P:symbiont-mediated suppression of host type I interferon-mediated signaling pathway"/>
    <property type="evidence" value="ECO:0007669"/>
    <property type="project" value="UniProtKB-KW"/>
</dbReference>
<dbReference type="GO" id="GO:0019087">
    <property type="term" value="P:symbiont-mediated transformation of host cell"/>
    <property type="evidence" value="ECO:0007669"/>
    <property type="project" value="InterPro"/>
</dbReference>
<dbReference type="GO" id="GO:0039694">
    <property type="term" value="P:viral RNA genome replication"/>
    <property type="evidence" value="ECO:0007669"/>
    <property type="project" value="InterPro"/>
</dbReference>
<dbReference type="GO" id="GO:0019062">
    <property type="term" value="P:virion attachment to host cell"/>
    <property type="evidence" value="ECO:0007669"/>
    <property type="project" value="UniProtKB-KW"/>
</dbReference>
<dbReference type="CDD" id="cd20903">
    <property type="entry name" value="HCV_p7"/>
    <property type="match status" value="1"/>
</dbReference>
<dbReference type="CDD" id="cd23202">
    <property type="entry name" value="Hepacivirus_RdRp"/>
    <property type="match status" value="1"/>
</dbReference>
<dbReference type="FunFam" id="1.10.820.10:FF:000001">
    <property type="entry name" value="Genome polyprotein"/>
    <property type="match status" value="1"/>
</dbReference>
<dbReference type="FunFam" id="2.20.25.220:FF:000001">
    <property type="entry name" value="Genome polyprotein"/>
    <property type="match status" value="1"/>
</dbReference>
<dbReference type="FunFam" id="2.40.10.10:FF:000029">
    <property type="entry name" value="Genome polyprotein"/>
    <property type="match status" value="1"/>
</dbReference>
<dbReference type="FunFam" id="2.40.10.120:FF:000003">
    <property type="entry name" value="Genome polyprotein"/>
    <property type="match status" value="1"/>
</dbReference>
<dbReference type="FunFam" id="3.30.160.890:FF:000001">
    <property type="entry name" value="Genome polyprotein"/>
    <property type="match status" value="1"/>
</dbReference>
<dbReference type="FunFam" id="3.30.70.270:FF:000015">
    <property type="entry name" value="Genome polyprotein"/>
    <property type="match status" value="1"/>
</dbReference>
<dbReference type="FunFam" id="3.40.50.300:FF:000557">
    <property type="entry name" value="Genome polyprotein"/>
    <property type="match status" value="1"/>
</dbReference>
<dbReference type="FunFam" id="3.40.50.300:FF:000717">
    <property type="entry name" value="Genome polyprotein"/>
    <property type="match status" value="1"/>
</dbReference>
<dbReference type="FunFam" id="4.10.710.10:FF:000001">
    <property type="entry name" value="Genome polyprotein"/>
    <property type="match status" value="1"/>
</dbReference>
<dbReference type="Gene3D" id="2.40.10.120">
    <property type="match status" value="1"/>
</dbReference>
<dbReference type="Gene3D" id="3.30.70.270">
    <property type="match status" value="2"/>
</dbReference>
<dbReference type="Gene3D" id="6.10.250.1610">
    <property type="match status" value="1"/>
</dbReference>
<dbReference type="Gene3D" id="6.10.250.1750">
    <property type="match status" value="1"/>
</dbReference>
<dbReference type="Gene3D" id="6.10.250.2920">
    <property type="match status" value="1"/>
</dbReference>
<dbReference type="Gene3D" id="2.20.25.210">
    <property type="entry name" value="Hepatitis C NS5A, domain 1B"/>
    <property type="match status" value="1"/>
</dbReference>
<dbReference type="Gene3D" id="4.10.710.10">
    <property type="entry name" value="Hepatitis C Virus Capsid Protein, Chain A"/>
    <property type="match status" value="1"/>
</dbReference>
<dbReference type="Gene3D" id="3.30.160.890">
    <property type="entry name" value="Hepatitis C virus envelope glycoprotein E1, chain C"/>
    <property type="match status" value="1"/>
</dbReference>
<dbReference type="Gene3D" id="2.30.30.710">
    <property type="entry name" value="Hepatitis C virus non-structural protein NS2, C-terminal domain"/>
    <property type="match status" value="1"/>
</dbReference>
<dbReference type="Gene3D" id="1.20.1280.150">
    <property type="entry name" value="Hepatitis C virus non-structural protein NS2, N-terminal domain"/>
    <property type="match status" value="1"/>
</dbReference>
<dbReference type="Gene3D" id="2.20.25.220">
    <property type="entry name" value="Hepatitis C virus NS5A, 1B domain"/>
    <property type="match status" value="1"/>
</dbReference>
<dbReference type="Gene3D" id="3.40.50.300">
    <property type="entry name" value="P-loop containing nucleotide triphosphate hydrolases"/>
    <property type="match status" value="2"/>
</dbReference>
<dbReference type="Gene3D" id="1.10.820.10">
    <property type="entry name" value="RNA Helicase Chain A , domain 3"/>
    <property type="match status" value="1"/>
</dbReference>
<dbReference type="Gene3D" id="2.40.10.10">
    <property type="entry name" value="Trypsin-like serine proteases"/>
    <property type="match status" value="1"/>
</dbReference>
<dbReference type="InterPro" id="IPR043502">
    <property type="entry name" value="DNA/RNA_pol_sf"/>
</dbReference>
<dbReference type="InterPro" id="IPR011492">
    <property type="entry name" value="Flavi_DEAD"/>
</dbReference>
<dbReference type="InterPro" id="IPR002521">
    <property type="entry name" value="HCV_Core_C"/>
</dbReference>
<dbReference type="InterPro" id="IPR044896">
    <property type="entry name" value="HCV_core_chain_A"/>
</dbReference>
<dbReference type="InterPro" id="IPR002522">
    <property type="entry name" value="HCV_core_N"/>
</dbReference>
<dbReference type="InterPro" id="IPR002519">
    <property type="entry name" value="HCV_Env"/>
</dbReference>
<dbReference type="InterPro" id="IPR002531">
    <property type="entry name" value="HCV_NS1"/>
</dbReference>
<dbReference type="InterPro" id="IPR002518">
    <property type="entry name" value="HCV_NS2"/>
</dbReference>
<dbReference type="InterPro" id="IPR042205">
    <property type="entry name" value="HCV_NS2_C"/>
</dbReference>
<dbReference type="InterPro" id="IPR042209">
    <property type="entry name" value="HCV_NS2_N"/>
</dbReference>
<dbReference type="InterPro" id="IPR000745">
    <property type="entry name" value="HCV_NS4a"/>
</dbReference>
<dbReference type="InterPro" id="IPR001490">
    <property type="entry name" value="HCV_NS4b"/>
</dbReference>
<dbReference type="InterPro" id="IPR002868">
    <property type="entry name" value="HCV_NS5a"/>
</dbReference>
<dbReference type="InterPro" id="IPR013192">
    <property type="entry name" value="HCV_NS5A_1a"/>
</dbReference>
<dbReference type="InterPro" id="IPR013193">
    <property type="entry name" value="HCV_NS5a_1B_dom"/>
</dbReference>
<dbReference type="InterPro" id="IPR038568">
    <property type="entry name" value="HCV_NS5A_1B_sf"/>
</dbReference>
<dbReference type="InterPro" id="IPR024350">
    <property type="entry name" value="HCV_NS5a_C"/>
</dbReference>
<dbReference type="InterPro" id="IPR049913">
    <property type="entry name" value="HCV_p7"/>
</dbReference>
<dbReference type="InterPro" id="IPR014001">
    <property type="entry name" value="Helicase_ATP-bd"/>
</dbReference>
<dbReference type="InterPro" id="IPR001650">
    <property type="entry name" value="Helicase_C-like"/>
</dbReference>
<dbReference type="InterPro" id="IPR004109">
    <property type="entry name" value="HepC_NS3_protease"/>
</dbReference>
<dbReference type="InterPro" id="IPR054175">
    <property type="entry name" value="NS3_helicase_C"/>
</dbReference>
<dbReference type="InterPro" id="IPR038170">
    <property type="entry name" value="NS5A_1a_sf"/>
</dbReference>
<dbReference type="InterPro" id="IPR027417">
    <property type="entry name" value="P-loop_NTPase"/>
</dbReference>
<dbReference type="InterPro" id="IPR009003">
    <property type="entry name" value="Peptidase_S1_PA"/>
</dbReference>
<dbReference type="InterPro" id="IPR043504">
    <property type="entry name" value="Peptidase_S1_PA_chymotrypsin"/>
</dbReference>
<dbReference type="InterPro" id="IPR043128">
    <property type="entry name" value="Rev_trsase/Diguanyl_cyclase"/>
</dbReference>
<dbReference type="InterPro" id="IPR007094">
    <property type="entry name" value="RNA-dir_pol_PSvirus"/>
</dbReference>
<dbReference type="InterPro" id="IPR002166">
    <property type="entry name" value="RNA_pol_HCV"/>
</dbReference>
<dbReference type="Pfam" id="PF07652">
    <property type="entry name" value="Flavi_DEAD"/>
    <property type="match status" value="1"/>
</dbReference>
<dbReference type="Pfam" id="PF01543">
    <property type="entry name" value="HCV_capsid"/>
    <property type="match status" value="1"/>
</dbReference>
<dbReference type="Pfam" id="PF01542">
    <property type="entry name" value="HCV_core"/>
    <property type="match status" value="1"/>
</dbReference>
<dbReference type="Pfam" id="PF01539">
    <property type="entry name" value="HCV_env"/>
    <property type="match status" value="1"/>
</dbReference>
<dbReference type="Pfam" id="PF01560">
    <property type="entry name" value="HCV_NS1"/>
    <property type="match status" value="1"/>
</dbReference>
<dbReference type="Pfam" id="PF01538">
    <property type="entry name" value="HCV_NS2"/>
    <property type="match status" value="1"/>
</dbReference>
<dbReference type="Pfam" id="PF01006">
    <property type="entry name" value="HCV_NS4a"/>
    <property type="match status" value="1"/>
</dbReference>
<dbReference type="Pfam" id="PF01001">
    <property type="entry name" value="HCV_NS4b"/>
    <property type="match status" value="1"/>
</dbReference>
<dbReference type="Pfam" id="PF01506">
    <property type="entry name" value="HCV_NS5a"/>
    <property type="match status" value="1"/>
</dbReference>
<dbReference type="Pfam" id="PF08300">
    <property type="entry name" value="HCV_NS5a_1a"/>
    <property type="match status" value="1"/>
</dbReference>
<dbReference type="Pfam" id="PF08301">
    <property type="entry name" value="HCV_NS5a_1b"/>
    <property type="match status" value="1"/>
</dbReference>
<dbReference type="Pfam" id="PF12941">
    <property type="entry name" value="HCV_NS5a_C"/>
    <property type="match status" value="1"/>
</dbReference>
<dbReference type="Pfam" id="PF22027">
    <property type="entry name" value="NS3_helicase_C"/>
    <property type="match status" value="1"/>
</dbReference>
<dbReference type="Pfam" id="PF02907">
    <property type="entry name" value="Peptidase_S29"/>
    <property type="match status" value="1"/>
</dbReference>
<dbReference type="Pfam" id="PF00998">
    <property type="entry name" value="RdRP_3"/>
    <property type="match status" value="1"/>
</dbReference>
<dbReference type="SMART" id="SM00487">
    <property type="entry name" value="DEXDc"/>
    <property type="match status" value="1"/>
</dbReference>
<dbReference type="SUPFAM" id="SSF56672">
    <property type="entry name" value="DNA/RNA polymerases"/>
    <property type="match status" value="1"/>
</dbReference>
<dbReference type="SUPFAM" id="SSF52540">
    <property type="entry name" value="P-loop containing nucleoside triphosphate hydrolases"/>
    <property type="match status" value="2"/>
</dbReference>
<dbReference type="SUPFAM" id="SSF50494">
    <property type="entry name" value="Trypsin-like serine proteases"/>
    <property type="match status" value="1"/>
</dbReference>
<dbReference type="PROSITE" id="PS51693">
    <property type="entry name" value="HCV_NS2_PRO"/>
    <property type="match status" value="1"/>
</dbReference>
<dbReference type="PROSITE" id="PS51192">
    <property type="entry name" value="HELICASE_ATP_BIND_1"/>
    <property type="match status" value="1"/>
</dbReference>
<dbReference type="PROSITE" id="PS51194">
    <property type="entry name" value="HELICASE_CTER"/>
    <property type="match status" value="1"/>
</dbReference>
<dbReference type="PROSITE" id="PS51822">
    <property type="entry name" value="HV_PV_NS3_PRO"/>
    <property type="match status" value="1"/>
</dbReference>
<dbReference type="PROSITE" id="PS50507">
    <property type="entry name" value="RDRP_SSRNA_POS"/>
    <property type="match status" value="1"/>
</dbReference>